<reference key="1">
    <citation type="journal article" date="2004" name="Virology">
        <title>The molecular epidemiology of dengue virus serotype 4 in Bangkok, Thailand.</title>
        <authorList>
            <person name="Klungthong C."/>
            <person name="Zhang C."/>
            <person name="Mammen M.P. Jr."/>
            <person name="Ubol S."/>
            <person name="Holmes E.C."/>
        </authorList>
    </citation>
    <scope>NUCLEOTIDE SEQUENCE [GENOMIC RNA]</scope>
</reference>
<reference key="2">
    <citation type="journal article" date="2008" name="EMBO J.">
        <title>Insights into RNA unwinding and ATP hydrolysis by the flavivirus NS3 protein.</title>
        <authorList>
            <person name="Luo D."/>
            <person name="Xu T."/>
            <person name="Watson R.P."/>
            <person name="Scherer-Becker D."/>
            <person name="Sampath A."/>
            <person name="Jahnke W."/>
            <person name="Yeong S.S."/>
            <person name="Wang C.H."/>
            <person name="Lim S.P."/>
            <person name="Strongin A."/>
            <person name="Vasudevan S.G."/>
            <person name="Lescar J."/>
        </authorList>
    </citation>
    <scope>X-RAY CRYSTALLOGRAPHY (1.67 ANGSTROMS) OF 1646-2092</scope>
</reference>
<reference key="3">
    <citation type="journal article" date="2010" name="J. Biol. Chem.">
        <title>Flexibility between the protease and helicase domains of the dengue virus NS3 protein conferred by the linker region and its functional implications.</title>
        <authorList>
            <person name="Luo D."/>
            <person name="Wei N."/>
            <person name="Doan D.N."/>
            <person name="Paradkar P.N."/>
            <person name="Chong Y."/>
            <person name="Davidson A.D."/>
            <person name="Kotaka M."/>
            <person name="Lescar J."/>
            <person name="Vasudevan S.G."/>
        </authorList>
    </citation>
    <scope>X-RAY CRYSTALLOGRAPHY (2.2 ANGSTROMS) OF 1393-2092</scope>
    <scope>TOPOLOGY (NON-STRUCTURAL PROTEIN 2B)</scope>
</reference>
<comment type="function">
    <molecule>Capsid protein C</molecule>
    <text evidence="6">Plays a role in virus budding by binding to the cell membrane and gathering the viral RNA into a nucleocapsid that forms the core of a mature virus particle. During virus entry, may induce genome penetration into the host cytoplasm after hemifusion induced by the surface proteins. Can migrate to the cell nucleus where it modulates host functions. Overcomes the anti-viral effects of host EXOC1 by sequestering and degrading the latter through the proteasome degradation pathway.</text>
</comment>
<comment type="function">
    <molecule>Capsid protein C</molecule>
    <text evidence="1">Inhibits RNA silencing by interfering with host Dicer.</text>
</comment>
<comment type="function">
    <molecule>Peptide pr</molecule>
    <text evidence="6">Prevents premature fusion activity of envelope proteins in trans-Golgi by binding to envelope protein E at pH6.0. After virion release in extracellular space, gets dissociated from E dimers.</text>
</comment>
<comment type="function">
    <molecule>Protein prM</molecule>
    <text evidence="6">Acts as a chaperone for envelope protein E during intracellular virion assembly by masking and inactivating envelope protein E fusion peptide. prM is the only viral peptide matured by host furin in the trans-Golgi network probably to avoid catastrophic activation of the viral fusion activity in acidic Golgi compartment prior to virion release. prM-E cleavage is inefficient, and many virions are only partially matured. These uncleaved prM would play a role in immune evasion.</text>
</comment>
<comment type="function">
    <molecule>Small envelope protein M</molecule>
    <text evidence="6">May play a role in virus budding. Exerts cytotoxic effects by activating a mitochondrial apoptotic pathway through M ectodomain. May display a viroporin activity.</text>
</comment>
<comment type="function">
    <molecule>Envelope protein E</molecule>
    <text evidence="6">Binds to host cell surface receptor and mediates fusion between viral and cellular membranes. Envelope protein is synthesized in the endoplasmic reticulum in the form of heterodimer with protein prM. They play a role in virion budding in the ER, and the newly formed immature particle is covered with 60 spikes composed of heterodimer between precursor prM and envelope protein E. The virion is transported to the Golgi apparatus where the low pH causes dissociation of PrM-E heterodimers and formation of E homodimers. prM-E cleavage is inefficient, and many virions are only partially matured. These uncleaved prM would play a role in immune evasion.</text>
</comment>
<comment type="function">
    <molecule>Non-structural protein 1</molecule>
    <text evidence="11">Involved in immune evasion, pathogenesis and viral replication. Once cleaved off the polyprotein, is targeted to three destinations: the viral replication cycle, the plasma membrane and the extracellular compartment. Essential for viral replication. Required for formation of the replication complex and recruitment of other non-structural proteins to the ER-derived membrane structures. Excreted as a hexameric lipoparticle that plays a role against host immune response. Antagonizing the complement function. Binds to the host macrophages and dendritic cells. Inhibits signal transduction originating from Toll-like receptor 3 (TLR3).</text>
</comment>
<comment type="function">
    <molecule>Non-structural protein 1</molecule>
    <text evidence="6">Disrupts the host endothelial glycocalyx layer of host pulmonary microvascular endothelial cells, inducing degradation of sialic acid and shedding of heparan sulfate proteoglycans. NS1 induces expression of sialidases, heparanase, and activates cathepsin L, which activates heparanase via enzymatic cleavage. These effects are probably linked to the endothelial hyperpermeability observed in severe dengue disease.</text>
</comment>
<comment type="function">
    <molecule>Non-structural protein 2A</molecule>
    <text evidence="6">Component of the viral RNA replication complex that functions in virion assembly and antagonizes the host immune response.</text>
</comment>
<comment type="function">
    <molecule>Serine protease subunit NS2B</molecule>
    <text evidence="6 16">Required cofactor for the serine protease function of NS3. May have membrane-destabilizing activity and form viroporins (By similarity).</text>
</comment>
<comment type="function">
    <molecule>Serine protease NS3</molecule>
    <text evidence="17">Displays three enzymatic activities: serine protease, NTPase and RNA helicase. NS3 serine protease, in association with NS2B, performs its autocleavage and cleaves the polyprotein at dibasic sites in the cytoplasm: C-prM, NS2A-NS2B, NS2B-NS3, NS3-NS4A, NS4A-2K and NS4B-NS5. NS3 RNA helicase binds RNA and unwinds dsRNA in the 3' to 5' direction.</text>
</comment>
<comment type="function">
    <molecule>Non-structural protein 4A</molecule>
    <text evidence="6 8 11">Regulates the ATPase activity of the NS3 helicase activity. NS4A allows NS3 helicase to conserve energy during unwinding. Plays a role in the inhibition of the host innate immune response. Interacts with host MAVS and thereby prevents the interaction between RIGI and MAVS. In turn, IFN-beta production is impaired. Interacts with host AUP1 which mediates induction of lipophagy in host cells and facilitates production of virus progeny particles (By similarity).</text>
</comment>
<comment type="function">
    <molecule>Peptide 2k</molecule>
    <text evidence="6">Functions as a signal peptide for NS4B and is required for the interferon antagonism activity of the latter.</text>
</comment>
<comment type="function">
    <molecule>Non-structural protein 4B</molecule>
    <text evidence="11">Induces the formation of ER-derived membrane vesicles where the viral replication takes place. Inhibits interferon (IFN)-induced host STAT1 phosphorylation and nuclear translocation, thereby preventing the establishment of cellular antiviral state by blocking the IFN-alpha/beta pathway.</text>
</comment>
<comment type="function">
    <molecule>RNA-directed RNA polymerase NS5</molecule>
    <text evidence="2 6">Replicates the viral (+) and (-) RNA genome, and performs the capping of genomes in the cytoplasm. NS5 methylates viral RNA cap at guanine N-7 and ribose 2'-O positions. Besides its role in RNA genome replication, also prevents the establishment of cellular antiviral state by blocking the interferon-alpha/beta (IFN-alpha/beta) signaling pathway. Inhibits host TYK2 and STAT2 phosphorylation, thereby preventing activation of JAK-STAT signaling pathway (By similarity). May reduce immune responses by preventing the recruitment of the host PAF1 complex to interferon-responsive genes (By similarity).</text>
</comment>
<comment type="catalytic activity">
    <molecule>Serine protease NS3</molecule>
    <reaction>
        <text>Selective hydrolysis of -Xaa-Xaa-|-Yaa- bonds in which each of the Xaa can be either Arg or Lys and Yaa can be either Ser or Ala.</text>
        <dbReference type="EC" id="3.4.21.91"/>
    </reaction>
</comment>
<comment type="catalytic activity">
    <molecule>RNA-directed RNA polymerase NS5</molecule>
    <reaction evidence="14">
        <text>RNA(n) + a ribonucleoside 5'-triphosphate = RNA(n+1) + diphosphate</text>
        <dbReference type="Rhea" id="RHEA:21248"/>
        <dbReference type="Rhea" id="RHEA-COMP:14527"/>
        <dbReference type="Rhea" id="RHEA-COMP:17342"/>
        <dbReference type="ChEBI" id="CHEBI:33019"/>
        <dbReference type="ChEBI" id="CHEBI:61557"/>
        <dbReference type="ChEBI" id="CHEBI:140395"/>
        <dbReference type="EC" id="2.7.7.48"/>
    </reaction>
</comment>
<comment type="catalytic activity">
    <reaction>
        <text>a ribonucleoside 5'-triphosphate + H2O = a ribonucleoside 5'-diphosphate + phosphate + H(+)</text>
        <dbReference type="Rhea" id="RHEA:23680"/>
        <dbReference type="ChEBI" id="CHEBI:15377"/>
        <dbReference type="ChEBI" id="CHEBI:15378"/>
        <dbReference type="ChEBI" id="CHEBI:43474"/>
        <dbReference type="ChEBI" id="CHEBI:57930"/>
        <dbReference type="ChEBI" id="CHEBI:61557"/>
        <dbReference type="EC" id="3.6.1.15"/>
    </reaction>
</comment>
<comment type="catalytic activity">
    <reaction>
        <text>ATP + H2O = ADP + phosphate + H(+)</text>
        <dbReference type="Rhea" id="RHEA:13065"/>
        <dbReference type="ChEBI" id="CHEBI:15377"/>
        <dbReference type="ChEBI" id="CHEBI:15378"/>
        <dbReference type="ChEBI" id="CHEBI:30616"/>
        <dbReference type="ChEBI" id="CHEBI:43474"/>
        <dbReference type="ChEBI" id="CHEBI:456216"/>
        <dbReference type="EC" id="3.6.4.13"/>
    </reaction>
</comment>
<comment type="catalytic activity">
    <reaction evidence="18">
        <text>a 5'-end (5'-triphosphoguanosine)-ribonucleoside in mRNA + S-adenosyl-L-methionine = a 5'-end (N(7)-methyl 5'-triphosphoguanosine)-ribonucleoside in mRNA + S-adenosyl-L-homocysteine</text>
        <dbReference type="Rhea" id="RHEA:67008"/>
        <dbReference type="Rhea" id="RHEA-COMP:17166"/>
        <dbReference type="Rhea" id="RHEA-COMP:17167"/>
        <dbReference type="ChEBI" id="CHEBI:57856"/>
        <dbReference type="ChEBI" id="CHEBI:59789"/>
        <dbReference type="ChEBI" id="CHEBI:156461"/>
        <dbReference type="ChEBI" id="CHEBI:167617"/>
        <dbReference type="EC" id="2.1.1.56"/>
    </reaction>
</comment>
<comment type="catalytic activity">
    <reaction evidence="18">
        <text>a 5'-end (N(7)-methyl 5'-triphosphoguanosine)-ribonucleoside in mRNA + S-adenosyl-L-methionine = a 5'-end (N(7)-methyl 5'-triphosphoguanosine)-(2'-O-methyl-ribonucleoside) in mRNA + S-adenosyl-L-homocysteine + H(+)</text>
        <dbReference type="Rhea" id="RHEA:67020"/>
        <dbReference type="Rhea" id="RHEA-COMP:17167"/>
        <dbReference type="Rhea" id="RHEA-COMP:17168"/>
        <dbReference type="ChEBI" id="CHEBI:15378"/>
        <dbReference type="ChEBI" id="CHEBI:57856"/>
        <dbReference type="ChEBI" id="CHEBI:59789"/>
        <dbReference type="ChEBI" id="CHEBI:156461"/>
        <dbReference type="ChEBI" id="CHEBI:167609"/>
        <dbReference type="EC" id="2.1.1.57"/>
    </reaction>
</comment>
<comment type="subunit">
    <molecule>Capsid protein C</molecule>
    <text evidence="6">Homodimer. Interacts (via N-terminus) with host EXOC1 (via C-terminus); this interaction results in EXOC1 degradation through the proteasome degradation pathway.</text>
</comment>
<comment type="subunit">
    <molecule>Protein prM</molecule>
    <text evidence="6">Forms heterodimers with envelope protein E in the endoplasmic reticulum and Golgi.</text>
</comment>
<comment type="subunit">
    <molecule>Envelope protein E</molecule>
    <text evidence="6">Homodimer; in the endoplasmic reticulum and Golgi. Interacts with protein prM. Interacts with non-structural protein 1.</text>
</comment>
<comment type="subunit">
    <molecule>Non-structural protein 1</molecule>
    <text evidence="6">Homodimer; Homohexamer when secreted. Interacts with envelope protein E.</text>
</comment>
<comment type="subunit">
    <molecule>Non-structural protein 2A</molecule>
    <text evidence="6">Interacts (via N-terminus) with serine protease NS3.</text>
</comment>
<comment type="subunit">
    <molecule>Serine protease subunit NS2B</molecule>
    <text evidence="6">Forms a heterodimer with serine protease NS3. May form homooligomers.</text>
</comment>
<comment type="subunit">
    <molecule>Serine protease NS3</molecule>
    <text evidence="6">Forms a heterodimer with NS2B. Interacts with NS4B. Interacts with unphosphorylated RNA-directed RNA polymerase NS5; this interaction stimulates RNA-directed RNA polymerase NS5 guanylyltransferase activity. Interacts with host SHFL.</text>
</comment>
<comment type="subunit">
    <molecule>Non-structural protein 4A</molecule>
    <text evidence="6 8">Interacts with host MAVS; this interaction inhibits the synthesis of IFN-beta. Interacts with host SHFL. Interacts with host AUP1; the interaction occurs in the presence of Dengue virus NS4B and induces lipophagy which facilitates production of virus progeny particles (By similarity).</text>
</comment>
<comment type="subunit">
    <molecule>Non-structural protein 4B</molecule>
    <text evidence="6">Interacts with serine protease NS3.</text>
</comment>
<comment type="subunit">
    <molecule>RNA-directed RNA polymerase NS5</molecule>
    <text evidence="2 6">Homodimer. Interacts with host STAT2; this interaction inhibits the phosphorylation of the latter, and, when all viral proteins are present (polyprotein), targets STAT2 for degradation. Interacts with serine protease NS3 (By similarity). Interacts with host PAF1 complex; the interaction may prevent the recruitment of the PAF1 complex to interferon-responsive genes, and thus reduces the immune response (By similarity).</text>
</comment>
<comment type="subcellular location">
    <molecule>Capsid protein C</molecule>
    <subcellularLocation>
        <location evidence="6">Virion</location>
    </subcellularLocation>
    <subcellularLocation>
        <location evidence="6">Host nucleus</location>
    </subcellularLocation>
    <subcellularLocation>
        <location evidence="6">Host cytoplasm</location>
    </subcellularLocation>
    <subcellularLocation>
        <location evidence="6">Host cytoplasm</location>
        <location evidence="6">Host perinuclear region</location>
    </subcellularLocation>
</comment>
<comment type="subcellular location">
    <molecule>Peptide pr</molecule>
    <subcellularLocation>
        <location evidence="6">Secreted</location>
    </subcellularLocation>
</comment>
<comment type="subcellular location">
    <molecule>Small envelope protein M</molecule>
    <subcellularLocation>
        <location evidence="6">Virion membrane</location>
        <topology evidence="12">Multi-pass membrane protein</topology>
    </subcellularLocation>
    <subcellularLocation>
        <location evidence="6">Host endoplasmic reticulum membrane</location>
        <topology evidence="12">Multi-pass membrane protein</topology>
    </subcellularLocation>
</comment>
<comment type="subcellular location">
    <molecule>Envelope protein E</molecule>
    <subcellularLocation>
        <location evidence="6">Virion membrane</location>
        <topology evidence="12">Multi-pass membrane protein</topology>
    </subcellularLocation>
    <subcellularLocation>
        <location evidence="6">Host endoplasmic reticulum membrane</location>
        <topology evidence="12">Multi-pass membrane protein</topology>
    </subcellularLocation>
</comment>
<comment type="subcellular location">
    <molecule>Non-structural protein 1</molecule>
    <subcellularLocation>
        <location evidence="6">Secreted</location>
    </subcellularLocation>
    <subcellularLocation>
        <location>Host endoplasmic reticulum membrane</location>
        <topology>Peripheral membrane protein</topology>
        <orientation evidence="6">Lumenal side</orientation>
    </subcellularLocation>
    <text evidence="11">Located in RE-derived vesicles hosting the replication complex.</text>
</comment>
<comment type="subcellular location">
    <molecule>Non-structural protein 2A</molecule>
    <subcellularLocation>
        <location evidence="6">Host endoplasmic reticulum membrane</location>
        <topology evidence="6">Multi-pass membrane protein</topology>
    </subcellularLocation>
</comment>
<comment type="subcellular location">
    <molecule>Serine protease subunit NS2B</molecule>
    <subcellularLocation>
        <location>Host endoplasmic reticulum membrane</location>
        <topology evidence="6">Multi-pass membrane protein</topology>
    </subcellularLocation>
</comment>
<comment type="subcellular location">
    <molecule>Serine protease NS3</molecule>
    <subcellularLocation>
        <location evidence="17">Host endoplasmic reticulum membrane</location>
        <topology evidence="17">Peripheral membrane protein</topology>
        <orientation evidence="17">Cytoplasmic side</orientation>
    </subcellularLocation>
    <text evidence="17">Remains non-covalently associated to serine protease subunit NS2B.</text>
</comment>
<comment type="subcellular location">
    <molecule>Non-structural protein 4A</molecule>
    <subcellularLocation>
        <location evidence="6">Host endoplasmic reticulum membrane</location>
        <topology evidence="6">Multi-pass membrane protein</topology>
    </subcellularLocation>
    <subcellularLocation>
        <location evidence="6">Host mitochondrion</location>
    </subcellularLocation>
    <text evidence="6">Located in RE-associated vesicles hosting the replication complex. Interacts with host MAVS in the mitochondrion-associated endoplasmic reticulum membranes.</text>
</comment>
<comment type="subcellular location">
    <molecule>Non-structural protein 4B</molecule>
    <subcellularLocation>
        <location evidence="6">Host endoplasmic reticulum membrane</location>
        <topology evidence="6">Multi-pass membrane protein</topology>
    </subcellularLocation>
    <text evidence="11">Located in RE-derived vesicles hosting the replication complex.</text>
</comment>
<comment type="subcellular location">
    <molecule>RNA-directed RNA polymerase NS5</molecule>
    <subcellularLocation>
        <location>Host endoplasmic reticulum membrane</location>
        <topology>Peripheral membrane protein</topology>
        <orientation>Cytoplasmic side</orientation>
    </subcellularLocation>
    <subcellularLocation>
        <location evidence="2 6">Host nucleus</location>
    </subcellularLocation>
    <text evidence="6">Located in RE-associated vesicles hosting the replication complex. NS5 protein is mainly localized in the nucleus rather than in ER vesicles, especially in the DENV 2, 3, 4 serotypes.</text>
</comment>
<comment type="domain">
    <text evidence="6">The transmembrane domains of the small envelope protein M and envelope protein E contain an endoplasmic reticulum retention signal.</text>
</comment>
<comment type="PTM">
    <molecule>Genome polyprotein</molecule>
    <text evidence="6">Specific enzymatic cleavages in vivo yield mature proteins. Cleavages in the lumen of endoplasmic reticulum are performed by host signal peptidase, whereas cleavages in the cytoplasmic side are performed by serine protease NS3. Signal cleavage at the 2K-4B site requires a prior NS3 protease-mediated cleavage at the 4A-2K site.</text>
</comment>
<comment type="PTM">
    <molecule>Protein prM</molecule>
    <text evidence="6">Cleaved in post-Golgi vesicles by a host furin, releasing the mature small envelope protein M, and peptide pr. This cleavage is incomplete as up to 30% of viral particles still carry uncleaved prM.</text>
</comment>
<comment type="PTM">
    <molecule>Envelope protein E</molecule>
    <text evidence="6">N-glycosylated.</text>
</comment>
<comment type="PTM">
    <molecule>Non-structural protein 1</molecule>
    <text evidence="6">N-glycosylated. The excreted form is glycosylated and this is required for efficient secretion of the protein from infected cells.</text>
</comment>
<comment type="PTM">
    <molecule>Serine protease NS3</molecule>
    <text evidence="9">Acetylated by host KAT5. Acetylation modulates NS3 RNA-binding and unwinding activities and plays an important positive role for viral replication.</text>
</comment>
<comment type="PTM">
    <molecule>RNA-directed RNA polymerase NS5</molecule>
    <text evidence="7">Sumoylation of RNA-directed RNA polymerase NS5 increases NS5 protein stability allowing proper viral RNA replication.</text>
</comment>
<comment type="PTM">
    <molecule>RNA-directed RNA polymerase NS5</molecule>
    <text evidence="6">Phosphorylated on serines residues. This phosphorylation may trigger NS5 nuclear localization.</text>
</comment>
<comment type="similarity">
    <text evidence="18">In the N-terminal section; belongs to the class I-like SAM-binding methyltransferase superfamily. mRNA cap 0-1 NS5-type methyltransferase family.</text>
</comment>
<dbReference type="EC" id="3.4.21.91"/>
<dbReference type="EC" id="3.6.1.15" evidence="11"/>
<dbReference type="EC" id="3.6.4.13" evidence="11"/>
<dbReference type="EC" id="2.1.1.56" evidence="18"/>
<dbReference type="EC" id="2.1.1.57" evidence="18"/>
<dbReference type="EC" id="2.7.7.48" evidence="14"/>
<dbReference type="EMBL" id="AY618990">
    <property type="protein sequence ID" value="AAU89377.1"/>
    <property type="molecule type" value="Genomic_RNA"/>
</dbReference>
<dbReference type="PDB" id="2JLQ">
    <property type="method" value="X-ray"/>
    <property type="resolution" value="1.67 A"/>
    <property type="chains" value="A=1646-2092"/>
</dbReference>
<dbReference type="PDB" id="2JLR">
    <property type="method" value="X-ray"/>
    <property type="resolution" value="2.00 A"/>
    <property type="chains" value="A=1646-2092"/>
</dbReference>
<dbReference type="PDB" id="2JLS">
    <property type="method" value="X-ray"/>
    <property type="resolution" value="2.23 A"/>
    <property type="chains" value="A=1646-2092"/>
</dbReference>
<dbReference type="PDB" id="2JLU">
    <property type="method" value="X-ray"/>
    <property type="resolution" value="2.04 A"/>
    <property type="chains" value="A/B=1646-2092"/>
</dbReference>
<dbReference type="PDB" id="2JLV">
    <property type="method" value="X-ray"/>
    <property type="resolution" value="2.30 A"/>
    <property type="chains" value="A/B=1646-2092"/>
</dbReference>
<dbReference type="PDB" id="2JLW">
    <property type="method" value="X-ray"/>
    <property type="resolution" value="2.60 A"/>
    <property type="chains" value="A/B=1646-2092"/>
</dbReference>
<dbReference type="PDB" id="2JLX">
    <property type="method" value="X-ray"/>
    <property type="resolution" value="2.20 A"/>
    <property type="chains" value="A/B=1646-2092"/>
</dbReference>
<dbReference type="PDB" id="2JLY">
    <property type="method" value="X-ray"/>
    <property type="resolution" value="2.40 A"/>
    <property type="chains" value="A/B=1646-2092"/>
</dbReference>
<dbReference type="PDB" id="2JLZ">
    <property type="method" value="X-ray"/>
    <property type="resolution" value="2.20 A"/>
    <property type="chains" value="A/B=1646-2092"/>
</dbReference>
<dbReference type="PDB" id="2WHX">
    <property type="method" value="X-ray"/>
    <property type="resolution" value="2.20 A"/>
    <property type="chains" value="A=1475-2092, C=1393-1406"/>
</dbReference>
<dbReference type="PDB" id="2WZQ">
    <property type="method" value="X-ray"/>
    <property type="resolution" value="2.80 A"/>
    <property type="chains" value="A=1475-2092, C=1393-1410"/>
</dbReference>
<dbReference type="PDB" id="3UYP">
    <property type="method" value="X-ray"/>
    <property type="resolution" value="2.00 A"/>
    <property type="chains" value="B=575-679"/>
</dbReference>
<dbReference type="PDB" id="5YVV">
    <property type="method" value="X-ray"/>
    <property type="resolution" value="3.10 A"/>
    <property type="chains" value="A=1393-1439, B=1494-2092"/>
</dbReference>
<dbReference type="PDB" id="5YVW">
    <property type="method" value="X-ray"/>
    <property type="resolution" value="3.10 A"/>
    <property type="chains" value="A=1393-1439, B=1494-2092"/>
</dbReference>
<dbReference type="PDBsum" id="2JLQ"/>
<dbReference type="PDBsum" id="2JLR"/>
<dbReference type="PDBsum" id="2JLS"/>
<dbReference type="PDBsum" id="2JLU"/>
<dbReference type="PDBsum" id="2JLV"/>
<dbReference type="PDBsum" id="2JLW"/>
<dbReference type="PDBsum" id="2JLX"/>
<dbReference type="PDBsum" id="2JLY"/>
<dbReference type="PDBsum" id="2JLZ"/>
<dbReference type="PDBsum" id="2WHX"/>
<dbReference type="PDBsum" id="2WZQ"/>
<dbReference type="PDBsum" id="3UYP"/>
<dbReference type="PDBsum" id="5YVV"/>
<dbReference type="PDBsum" id="5YVW"/>
<dbReference type="BMRB" id="Q2YHF0"/>
<dbReference type="SMR" id="Q2YHF0"/>
<dbReference type="MEROPS" id="S07.001"/>
<dbReference type="ABCD" id="Q2YHF0">
    <property type="antibodies" value="1 sequenced antibody"/>
</dbReference>
<dbReference type="BRENDA" id="3.4.21.91">
    <property type="organism ID" value="9641"/>
</dbReference>
<dbReference type="EvolutionaryTrace" id="Q2YHF0"/>
<dbReference type="PRO" id="PR:Q2YHF0"/>
<dbReference type="Proteomes" id="UP000000273">
    <property type="component" value="Genome"/>
</dbReference>
<dbReference type="GO" id="GO:0005576">
    <property type="term" value="C:extracellular region"/>
    <property type="evidence" value="ECO:0007669"/>
    <property type="project" value="UniProtKB-SubCell"/>
</dbReference>
<dbReference type="GO" id="GO:0044167">
    <property type="term" value="C:host cell endoplasmic reticulum membrane"/>
    <property type="evidence" value="ECO:0007669"/>
    <property type="project" value="UniProtKB-SubCell"/>
</dbReference>
<dbReference type="GO" id="GO:0033650">
    <property type="term" value="C:host cell mitochondrion"/>
    <property type="evidence" value="ECO:0007669"/>
    <property type="project" value="UniProtKB-SubCell"/>
</dbReference>
<dbReference type="GO" id="GO:0042025">
    <property type="term" value="C:host cell nucleus"/>
    <property type="evidence" value="ECO:0007669"/>
    <property type="project" value="UniProtKB-SubCell"/>
</dbReference>
<dbReference type="GO" id="GO:0044220">
    <property type="term" value="C:host cell perinuclear region of cytoplasm"/>
    <property type="evidence" value="ECO:0007669"/>
    <property type="project" value="UniProtKB-SubCell"/>
</dbReference>
<dbReference type="GO" id="GO:0016020">
    <property type="term" value="C:membrane"/>
    <property type="evidence" value="ECO:0007669"/>
    <property type="project" value="UniProtKB-KW"/>
</dbReference>
<dbReference type="GO" id="GO:0019028">
    <property type="term" value="C:viral capsid"/>
    <property type="evidence" value="ECO:0007669"/>
    <property type="project" value="UniProtKB-KW"/>
</dbReference>
<dbReference type="GO" id="GO:0019031">
    <property type="term" value="C:viral envelope"/>
    <property type="evidence" value="ECO:0007669"/>
    <property type="project" value="UniProtKB-KW"/>
</dbReference>
<dbReference type="GO" id="GO:0055036">
    <property type="term" value="C:virion membrane"/>
    <property type="evidence" value="ECO:0007669"/>
    <property type="project" value="UniProtKB-SubCell"/>
</dbReference>
<dbReference type="GO" id="GO:0005524">
    <property type="term" value="F:ATP binding"/>
    <property type="evidence" value="ECO:0007669"/>
    <property type="project" value="UniProtKB-KW"/>
</dbReference>
<dbReference type="GO" id="GO:0016887">
    <property type="term" value="F:ATP hydrolysis activity"/>
    <property type="evidence" value="ECO:0007669"/>
    <property type="project" value="RHEA"/>
</dbReference>
<dbReference type="GO" id="GO:0015267">
    <property type="term" value="F:channel activity"/>
    <property type="evidence" value="ECO:0007669"/>
    <property type="project" value="UniProtKB-KW"/>
</dbReference>
<dbReference type="GO" id="GO:0003725">
    <property type="term" value="F:double-stranded RNA binding"/>
    <property type="evidence" value="ECO:0007669"/>
    <property type="project" value="InterPro"/>
</dbReference>
<dbReference type="GO" id="GO:0046872">
    <property type="term" value="F:metal ion binding"/>
    <property type="evidence" value="ECO:0007669"/>
    <property type="project" value="UniProtKB-KW"/>
</dbReference>
<dbReference type="GO" id="GO:0004483">
    <property type="term" value="F:mRNA (nucleoside-2'-O-)-methyltransferase activity"/>
    <property type="evidence" value="ECO:0007669"/>
    <property type="project" value="UniProtKB-EC"/>
</dbReference>
<dbReference type="GO" id="GO:0004482">
    <property type="term" value="F:mRNA 5'-cap (guanine-N7-)-methyltransferase activity"/>
    <property type="evidence" value="ECO:0007669"/>
    <property type="project" value="UniProtKB-EC"/>
</dbReference>
<dbReference type="GO" id="GO:0046983">
    <property type="term" value="F:protein dimerization activity"/>
    <property type="evidence" value="ECO:0007669"/>
    <property type="project" value="InterPro"/>
</dbReference>
<dbReference type="GO" id="GO:0003724">
    <property type="term" value="F:RNA helicase activity"/>
    <property type="evidence" value="ECO:0007669"/>
    <property type="project" value="UniProtKB-EC"/>
</dbReference>
<dbReference type="GO" id="GO:0003968">
    <property type="term" value="F:RNA-directed RNA polymerase activity"/>
    <property type="evidence" value="ECO:0007669"/>
    <property type="project" value="UniProtKB-KW"/>
</dbReference>
<dbReference type="GO" id="GO:0004252">
    <property type="term" value="F:serine-type endopeptidase activity"/>
    <property type="evidence" value="ECO:0007669"/>
    <property type="project" value="InterPro"/>
</dbReference>
<dbReference type="GO" id="GO:0005198">
    <property type="term" value="F:structural molecule activity"/>
    <property type="evidence" value="ECO:0007669"/>
    <property type="project" value="InterPro"/>
</dbReference>
<dbReference type="GO" id="GO:0075512">
    <property type="term" value="P:clathrin-dependent endocytosis of virus by host cell"/>
    <property type="evidence" value="ECO:0007669"/>
    <property type="project" value="UniProtKB-KW"/>
</dbReference>
<dbReference type="GO" id="GO:0039654">
    <property type="term" value="P:fusion of virus membrane with host endosome membrane"/>
    <property type="evidence" value="ECO:0007669"/>
    <property type="project" value="UniProtKB-KW"/>
</dbReference>
<dbReference type="GO" id="GO:0034220">
    <property type="term" value="P:monoatomic ion transmembrane transport"/>
    <property type="evidence" value="ECO:0007669"/>
    <property type="project" value="UniProtKB-KW"/>
</dbReference>
<dbReference type="GO" id="GO:0006508">
    <property type="term" value="P:proteolysis"/>
    <property type="evidence" value="ECO:0007669"/>
    <property type="project" value="UniProtKB-KW"/>
</dbReference>
<dbReference type="GO" id="GO:0039520">
    <property type="term" value="P:symbiont-mediated activation of host autophagy"/>
    <property type="evidence" value="ECO:0007669"/>
    <property type="project" value="UniProtKB-KW"/>
</dbReference>
<dbReference type="GO" id="GO:0039545">
    <property type="term" value="P:symbiont-mediated suppression of host cytoplasmic pattern recognition receptor signaling pathway via inhibition of MAVS activity"/>
    <property type="evidence" value="ECO:0007669"/>
    <property type="project" value="UniProtKB-KW"/>
</dbReference>
<dbReference type="GO" id="GO:0039574">
    <property type="term" value="P:symbiont-mediated suppression of host JAK-STAT cascade via inhibition of host TYK2 activity"/>
    <property type="evidence" value="ECO:0007669"/>
    <property type="project" value="UniProtKB-KW"/>
</dbReference>
<dbReference type="GO" id="GO:0039564">
    <property type="term" value="P:symbiont-mediated suppression of host JAK-STAT cascade via inhibition of STAT2 activity"/>
    <property type="evidence" value="ECO:0007669"/>
    <property type="project" value="UniProtKB-KW"/>
</dbReference>
<dbReference type="GO" id="GO:0039502">
    <property type="term" value="P:symbiont-mediated suppression of host type I interferon-mediated signaling pathway"/>
    <property type="evidence" value="ECO:0007669"/>
    <property type="project" value="UniProtKB-KW"/>
</dbReference>
<dbReference type="GO" id="GO:0039694">
    <property type="term" value="P:viral RNA genome replication"/>
    <property type="evidence" value="ECO:0007669"/>
    <property type="project" value="InterPro"/>
</dbReference>
<dbReference type="GO" id="GO:0019062">
    <property type="term" value="P:virion attachment to host cell"/>
    <property type="evidence" value="ECO:0007669"/>
    <property type="project" value="UniProtKB-KW"/>
</dbReference>
<dbReference type="CDD" id="cd20761">
    <property type="entry name" value="capping_2-OMTase_Flaviviridae"/>
    <property type="match status" value="1"/>
</dbReference>
<dbReference type="CDD" id="cd17931">
    <property type="entry name" value="DEXHc_viral_Ns3"/>
    <property type="match status" value="1"/>
</dbReference>
<dbReference type="CDD" id="cd12149">
    <property type="entry name" value="Flavi_E_C"/>
    <property type="match status" value="1"/>
</dbReference>
<dbReference type="CDD" id="cd17038">
    <property type="entry name" value="Flavi_M"/>
    <property type="match status" value="1"/>
</dbReference>
<dbReference type="CDD" id="cd23204">
    <property type="entry name" value="Flavivirus_RdRp"/>
    <property type="match status" value="1"/>
</dbReference>
<dbReference type="CDD" id="cd18806">
    <property type="entry name" value="SF2_C_viral"/>
    <property type="match status" value="1"/>
</dbReference>
<dbReference type="DisProt" id="DP01931"/>
<dbReference type="FunFam" id="1.20.1280.260:FF:000001">
    <property type="entry name" value="Envelope glycoprotein"/>
    <property type="match status" value="1"/>
</dbReference>
<dbReference type="FunFam" id="2.60.40.350:FF:000001">
    <property type="entry name" value="Envelope glycoprotein"/>
    <property type="match status" value="1"/>
</dbReference>
<dbReference type="FunFam" id="1.10.10.930:FF:000001">
    <property type="entry name" value="Genome polyprotein"/>
    <property type="match status" value="1"/>
</dbReference>
<dbReference type="FunFam" id="1.10.260.90:FF:000001">
    <property type="entry name" value="Genome polyprotein"/>
    <property type="match status" value="1"/>
</dbReference>
<dbReference type="FunFam" id="1.10.8.970:FF:000002">
    <property type="entry name" value="Genome polyprotein"/>
    <property type="match status" value="1"/>
</dbReference>
<dbReference type="FunFam" id="2.40.10.120:FF:000008">
    <property type="entry name" value="Genome polyprotein"/>
    <property type="match status" value="1"/>
</dbReference>
<dbReference type="FunFam" id="2.60.260.50:FF:000001">
    <property type="entry name" value="Genome polyprotein"/>
    <property type="match status" value="1"/>
</dbReference>
<dbReference type="FunFam" id="3.30.70.2840:FF:000001">
    <property type="entry name" value="Genome polyprotein"/>
    <property type="match status" value="1"/>
</dbReference>
<dbReference type="FunFam" id="3.30.70.2840:FF:000002">
    <property type="entry name" value="Genome polyprotein"/>
    <property type="match status" value="1"/>
</dbReference>
<dbReference type="FunFam" id="3.30.70.2840:FF:000004">
    <property type="entry name" value="Genome polyprotein"/>
    <property type="match status" value="1"/>
</dbReference>
<dbReference type="FunFam" id="3.40.50.150:FF:000105">
    <property type="entry name" value="Genome polyprotein"/>
    <property type="match status" value="1"/>
</dbReference>
<dbReference type="FunFam" id="3.40.50.300:FF:000763">
    <property type="entry name" value="Genome polyprotein"/>
    <property type="match status" value="1"/>
</dbReference>
<dbReference type="Gene3D" id="1.10.10.930">
    <property type="match status" value="1"/>
</dbReference>
<dbReference type="Gene3D" id="1.10.260.90">
    <property type="match status" value="1"/>
</dbReference>
<dbReference type="Gene3D" id="1.20.1280.260">
    <property type="match status" value="1"/>
</dbReference>
<dbReference type="Gene3D" id="2.40.10.120">
    <property type="match status" value="2"/>
</dbReference>
<dbReference type="Gene3D" id="2.60.40.350">
    <property type="match status" value="1"/>
</dbReference>
<dbReference type="Gene3D" id="1.10.8.970">
    <property type="entry name" value="Flavivirus envelope glycoprotein M-like"/>
    <property type="match status" value="1"/>
</dbReference>
<dbReference type="Gene3D" id="2.60.260.50">
    <property type="entry name" value="Flavivirus polyprotein propeptide domain"/>
    <property type="match status" value="1"/>
</dbReference>
<dbReference type="Gene3D" id="3.30.70.2840">
    <property type="entry name" value="Flavivirus RNA-directed RNA polymerase, thumb domain"/>
    <property type="match status" value="3"/>
</dbReference>
<dbReference type="Gene3D" id="3.40.50.300">
    <property type="entry name" value="P-loop containing nucleotide triphosphate hydrolases"/>
    <property type="match status" value="2"/>
</dbReference>
<dbReference type="Gene3D" id="2.60.98.10">
    <property type="entry name" value="Tick-borne Encephalitis virus Glycoprotein, domain 1"/>
    <property type="match status" value="1"/>
</dbReference>
<dbReference type="Gene3D" id="2.40.10.10">
    <property type="entry name" value="Trypsin-like serine proteases"/>
    <property type="match status" value="1"/>
</dbReference>
<dbReference type="Gene3D" id="3.40.50.150">
    <property type="entry name" value="Vaccinia Virus protein VP39"/>
    <property type="match status" value="1"/>
</dbReference>
<dbReference type="Gene3D" id="3.30.67.10">
    <property type="entry name" value="Viral Envelope Glycoprotein, domain 2"/>
    <property type="match status" value="1"/>
</dbReference>
<dbReference type="Gene3D" id="3.30.387.10">
    <property type="entry name" value="Viral Envelope Glycoprotein, domain 3"/>
    <property type="match status" value="1"/>
</dbReference>
<dbReference type="InterPro" id="IPR043502">
    <property type="entry name" value="DNA/RNA_pol_sf"/>
</dbReference>
<dbReference type="InterPro" id="IPR000069">
    <property type="entry name" value="Env_glycoprot_M_flavivir"/>
</dbReference>
<dbReference type="InterPro" id="IPR038302">
    <property type="entry name" value="Env_glycoprot_M_sf_flavivir"/>
</dbReference>
<dbReference type="InterPro" id="IPR013755">
    <property type="entry name" value="Flav_gly_cen_dom_subdom1"/>
</dbReference>
<dbReference type="InterPro" id="IPR001122">
    <property type="entry name" value="Flavi_capsidC"/>
</dbReference>
<dbReference type="InterPro" id="IPR037172">
    <property type="entry name" value="Flavi_capsidC_sf"/>
</dbReference>
<dbReference type="InterPro" id="IPR011492">
    <property type="entry name" value="Flavi_DEAD"/>
</dbReference>
<dbReference type="InterPro" id="IPR027287">
    <property type="entry name" value="Flavi_E_Ig-like"/>
</dbReference>
<dbReference type="InterPro" id="IPR026470">
    <property type="entry name" value="Flavi_E_Stem/Anchor_dom"/>
</dbReference>
<dbReference type="InterPro" id="IPR038345">
    <property type="entry name" value="Flavi_E_Stem/Anchor_dom_sf"/>
</dbReference>
<dbReference type="InterPro" id="IPR011998">
    <property type="entry name" value="Flavi_Glycoprot_E_cen/dimer"/>
</dbReference>
<dbReference type="InterPro" id="IPR001157">
    <property type="entry name" value="Flavi_NS1"/>
</dbReference>
<dbReference type="InterPro" id="IPR000752">
    <property type="entry name" value="Flavi_NS2A"/>
</dbReference>
<dbReference type="InterPro" id="IPR000487">
    <property type="entry name" value="Flavi_NS2B"/>
</dbReference>
<dbReference type="InterPro" id="IPR001850">
    <property type="entry name" value="Flavi_NS3_S7"/>
</dbReference>
<dbReference type="InterPro" id="IPR000404">
    <property type="entry name" value="Flavi_NS4A"/>
</dbReference>
<dbReference type="InterPro" id="IPR001528">
    <property type="entry name" value="Flavi_NS4B"/>
</dbReference>
<dbReference type="InterPro" id="IPR046811">
    <property type="entry name" value="Flavi_NS5_thumb"/>
</dbReference>
<dbReference type="InterPro" id="IPR002535">
    <property type="entry name" value="Flavi_propep"/>
</dbReference>
<dbReference type="InterPro" id="IPR038688">
    <property type="entry name" value="Flavi_propep_sf"/>
</dbReference>
<dbReference type="InterPro" id="IPR047530">
    <property type="entry name" value="Flavi_RdRp"/>
</dbReference>
<dbReference type="InterPro" id="IPR000208">
    <property type="entry name" value="Flavi_RdRp_fingers/palm"/>
</dbReference>
<dbReference type="InterPro" id="IPR000336">
    <property type="entry name" value="Flavivir/Alphavir_Ig-like_sf"/>
</dbReference>
<dbReference type="InterPro" id="IPR014412">
    <property type="entry name" value="Gen_Poly_FLV"/>
</dbReference>
<dbReference type="InterPro" id="IPR036253">
    <property type="entry name" value="Glycoprot_cen/dimer_sf"/>
</dbReference>
<dbReference type="InterPro" id="IPR038055">
    <property type="entry name" value="Glycoprot_E_dimer_dom"/>
</dbReference>
<dbReference type="InterPro" id="IPR013756">
    <property type="entry name" value="GlyE_cen_dom_subdom2"/>
</dbReference>
<dbReference type="InterPro" id="IPR014001">
    <property type="entry name" value="Helicase_ATP-bd"/>
</dbReference>
<dbReference type="InterPro" id="IPR001650">
    <property type="entry name" value="Helicase_C-like"/>
</dbReference>
<dbReference type="InterPro" id="IPR014756">
    <property type="entry name" value="Ig_E-set"/>
</dbReference>
<dbReference type="InterPro" id="IPR026490">
    <property type="entry name" value="mRNA_cap_0/1_MeTrfase"/>
</dbReference>
<dbReference type="InterPro" id="IPR049486">
    <property type="entry name" value="NS3-hel_C_flaviviridae"/>
</dbReference>
<dbReference type="InterPro" id="IPR027417">
    <property type="entry name" value="P-loop_NTPase"/>
</dbReference>
<dbReference type="InterPro" id="IPR009003">
    <property type="entry name" value="Peptidase_S1_PA"/>
</dbReference>
<dbReference type="InterPro" id="IPR043504">
    <property type="entry name" value="Peptidase_S1_PA_chymotrypsin"/>
</dbReference>
<dbReference type="InterPro" id="IPR007094">
    <property type="entry name" value="RNA-dir_pol_PSvirus"/>
</dbReference>
<dbReference type="InterPro" id="IPR002877">
    <property type="entry name" value="RNA_MeTrfase_FtsJ_dom"/>
</dbReference>
<dbReference type="InterPro" id="IPR029063">
    <property type="entry name" value="SAM-dependent_MTases_sf"/>
</dbReference>
<dbReference type="NCBIfam" id="TIGR04240">
    <property type="entry name" value="flavi_E_stem"/>
    <property type="match status" value="1"/>
</dbReference>
<dbReference type="Pfam" id="PF20907">
    <property type="entry name" value="Flav_NS3-hel_C"/>
    <property type="match status" value="1"/>
</dbReference>
<dbReference type="Pfam" id="PF01003">
    <property type="entry name" value="Flavi_capsid"/>
    <property type="match status" value="1"/>
</dbReference>
<dbReference type="Pfam" id="PF07652">
    <property type="entry name" value="Flavi_DEAD"/>
    <property type="match status" value="1"/>
</dbReference>
<dbReference type="Pfam" id="PF21659">
    <property type="entry name" value="Flavi_E_stem"/>
    <property type="match status" value="1"/>
</dbReference>
<dbReference type="Pfam" id="PF02832">
    <property type="entry name" value="Flavi_glycop_C"/>
    <property type="match status" value="1"/>
</dbReference>
<dbReference type="Pfam" id="PF00869">
    <property type="entry name" value="Flavi_glycoprot"/>
    <property type="match status" value="1"/>
</dbReference>
<dbReference type="Pfam" id="PF01004">
    <property type="entry name" value="Flavi_M"/>
    <property type="match status" value="1"/>
</dbReference>
<dbReference type="Pfam" id="PF00948">
    <property type="entry name" value="Flavi_NS1"/>
    <property type="match status" value="1"/>
</dbReference>
<dbReference type="Pfam" id="PF01005">
    <property type="entry name" value="Flavi_NS2A"/>
    <property type="match status" value="1"/>
</dbReference>
<dbReference type="Pfam" id="PF01002">
    <property type="entry name" value="Flavi_NS2B"/>
    <property type="match status" value="1"/>
</dbReference>
<dbReference type="Pfam" id="PF01350">
    <property type="entry name" value="Flavi_NS4A"/>
    <property type="match status" value="1"/>
</dbReference>
<dbReference type="Pfam" id="PF01349">
    <property type="entry name" value="Flavi_NS4B"/>
    <property type="match status" value="1"/>
</dbReference>
<dbReference type="Pfam" id="PF00972">
    <property type="entry name" value="Flavi_NS5"/>
    <property type="match status" value="1"/>
</dbReference>
<dbReference type="Pfam" id="PF20483">
    <property type="entry name" value="Flavi_NS5_thumb"/>
    <property type="match status" value="1"/>
</dbReference>
<dbReference type="Pfam" id="PF01570">
    <property type="entry name" value="Flavi_propep"/>
    <property type="match status" value="1"/>
</dbReference>
<dbReference type="Pfam" id="PF01728">
    <property type="entry name" value="FtsJ"/>
    <property type="match status" value="1"/>
</dbReference>
<dbReference type="Pfam" id="PF00949">
    <property type="entry name" value="Peptidase_S7"/>
    <property type="match status" value="1"/>
</dbReference>
<dbReference type="PIRSF" id="PIRSF003817">
    <property type="entry name" value="Gen_Poly_FLV"/>
    <property type="match status" value="1"/>
</dbReference>
<dbReference type="SMART" id="SM00487">
    <property type="entry name" value="DEXDc"/>
    <property type="match status" value="1"/>
</dbReference>
<dbReference type="SMART" id="SM00490">
    <property type="entry name" value="HELICc"/>
    <property type="match status" value="1"/>
</dbReference>
<dbReference type="SUPFAM" id="SSF56672">
    <property type="entry name" value="DNA/RNA polymerases"/>
    <property type="match status" value="1"/>
</dbReference>
<dbReference type="SUPFAM" id="SSF81296">
    <property type="entry name" value="E set domains"/>
    <property type="match status" value="1"/>
</dbReference>
<dbReference type="SUPFAM" id="SSF101257">
    <property type="entry name" value="Flavivirus capsid protein C"/>
    <property type="match status" value="1"/>
</dbReference>
<dbReference type="SUPFAM" id="SSF52540">
    <property type="entry name" value="P-loop containing nucleoside triphosphate hydrolases"/>
    <property type="match status" value="2"/>
</dbReference>
<dbReference type="SUPFAM" id="SSF53335">
    <property type="entry name" value="S-adenosyl-L-methionine-dependent methyltransferases"/>
    <property type="match status" value="1"/>
</dbReference>
<dbReference type="SUPFAM" id="SSF50494">
    <property type="entry name" value="Trypsin-like serine proteases"/>
    <property type="match status" value="1"/>
</dbReference>
<dbReference type="SUPFAM" id="SSF56983">
    <property type="entry name" value="Viral glycoprotein, central and dimerisation domains"/>
    <property type="match status" value="1"/>
</dbReference>
<dbReference type="PROSITE" id="PS51527">
    <property type="entry name" value="FLAVIVIRUS_NS2B"/>
    <property type="match status" value="1"/>
</dbReference>
<dbReference type="PROSITE" id="PS51528">
    <property type="entry name" value="FLAVIVIRUS_NS3PRO"/>
    <property type="match status" value="1"/>
</dbReference>
<dbReference type="PROSITE" id="PS51192">
    <property type="entry name" value="HELICASE_ATP_BIND_1"/>
    <property type="match status" value="1"/>
</dbReference>
<dbReference type="PROSITE" id="PS51194">
    <property type="entry name" value="HELICASE_CTER"/>
    <property type="match status" value="1"/>
</dbReference>
<dbReference type="PROSITE" id="PS50507">
    <property type="entry name" value="RDRP_SSRNA_POS"/>
    <property type="match status" value="1"/>
</dbReference>
<dbReference type="PROSITE" id="PS51591">
    <property type="entry name" value="RNA_CAP01_NS5_MT"/>
    <property type="match status" value="1"/>
</dbReference>
<keyword id="KW-0002">3D-structure</keyword>
<keyword id="KW-0007">Acetylation</keyword>
<keyword id="KW-1072">Activation of host autophagy by virus</keyword>
<keyword id="KW-0067">ATP-binding</keyword>
<keyword id="KW-0167">Capsid protein</keyword>
<keyword id="KW-1165">Clathrin-mediated endocytosis of virus by host</keyword>
<keyword id="KW-0165">Cleavage on pair of basic residues</keyword>
<keyword id="KW-1015">Disulfide bond</keyword>
<keyword id="KW-1170">Fusion of virus membrane with host endosomal membrane</keyword>
<keyword id="KW-1168">Fusion of virus membrane with host membrane</keyword>
<keyword id="KW-0325">Glycoprotein</keyword>
<keyword id="KW-0347">Helicase</keyword>
<keyword id="KW-1035">Host cytoplasm</keyword>
<keyword id="KW-1038">Host endoplasmic reticulum</keyword>
<keyword id="KW-1043">Host membrane</keyword>
<keyword id="KW-1045">Host mitochondrion</keyword>
<keyword id="KW-1048">Host nucleus</keyword>
<keyword id="KW-0945">Host-virus interaction</keyword>
<keyword id="KW-0378">Hydrolase</keyword>
<keyword id="KW-1090">Inhibition of host innate immune response by virus</keyword>
<keyword id="KW-1114">Inhibition of host interferon signaling pathway by virus</keyword>
<keyword id="KW-1097">Inhibition of host MAVS by virus</keyword>
<keyword id="KW-1113">Inhibition of host RLR pathway by virus</keyword>
<keyword id="KW-1106">Inhibition of host STAT2 by virus</keyword>
<keyword id="KW-1112">Inhibition of host TYK2 by virus</keyword>
<keyword id="KW-0922">Interferon antiviral system evasion</keyword>
<keyword id="KW-0407">Ion channel</keyword>
<keyword id="KW-0406">Ion transport</keyword>
<keyword id="KW-0472">Membrane</keyword>
<keyword id="KW-0479">Metal-binding</keyword>
<keyword id="KW-0489">Methyltransferase</keyword>
<keyword id="KW-0506">mRNA capping</keyword>
<keyword id="KW-0507">mRNA processing</keyword>
<keyword id="KW-0511">Multifunctional enzyme</keyword>
<keyword id="KW-0547">Nucleotide-binding</keyword>
<keyword id="KW-0548">Nucleotidyltransferase</keyword>
<keyword id="KW-0597">Phosphoprotein</keyword>
<keyword id="KW-0645">Protease</keyword>
<keyword id="KW-0694">RNA-binding</keyword>
<keyword id="KW-0696">RNA-directed RNA polymerase</keyword>
<keyword id="KW-0949">S-adenosyl-L-methionine</keyword>
<keyword id="KW-0964">Secreted</keyword>
<keyword id="KW-0720">Serine protease</keyword>
<keyword id="KW-0941">Suppressor of RNA silencing</keyword>
<keyword id="KW-0804">Transcription</keyword>
<keyword id="KW-0805">Transcription regulation</keyword>
<keyword id="KW-0808">Transferase</keyword>
<keyword id="KW-0812">Transmembrane</keyword>
<keyword id="KW-1133">Transmembrane helix</keyword>
<keyword id="KW-0813">Transport</keyword>
<keyword id="KW-0832">Ubl conjugation</keyword>
<keyword id="KW-1161">Viral attachment to host cell</keyword>
<keyword id="KW-0261">Viral envelope protein</keyword>
<keyword id="KW-0899">Viral immunoevasion</keyword>
<keyword id="KW-1182">Viral ion channel</keyword>
<keyword id="KW-1162">Viral penetration into host cytoplasm</keyword>
<keyword id="KW-0693">Viral RNA replication</keyword>
<keyword id="KW-0946">Virion</keyword>
<keyword id="KW-1164">Virus endocytosis by host</keyword>
<keyword id="KW-1160">Virus entry into host cell</keyword>
<keyword id="KW-0862">Zinc</keyword>
<protein>
    <recommendedName>
        <fullName>Genome polyprotein</fullName>
    </recommendedName>
    <component>
        <recommendedName>
            <fullName>Capsid protein C</fullName>
        </recommendedName>
        <alternativeName>
            <fullName>Core protein</fullName>
        </alternativeName>
    </component>
    <component>
        <recommendedName>
            <fullName>Protein prM</fullName>
        </recommendedName>
    </component>
    <component>
        <recommendedName>
            <fullName>Peptide pr</fullName>
        </recommendedName>
    </component>
    <component>
        <recommendedName>
            <fullName>Small envelope protein M</fullName>
        </recommendedName>
        <alternativeName>
            <fullName>Matrix protein</fullName>
        </alternativeName>
    </component>
    <component>
        <recommendedName>
            <fullName>Envelope protein E</fullName>
        </recommendedName>
    </component>
    <component>
        <recommendedName>
            <fullName>Non-structural protein 1</fullName>
            <shortName>NS1</shortName>
        </recommendedName>
    </component>
    <component>
        <recommendedName>
            <fullName>Non-structural protein 2A</fullName>
            <shortName>NS2A</shortName>
        </recommendedName>
    </component>
    <component>
        <recommendedName>
            <fullName>Serine protease subunit NS2B</fullName>
        </recommendedName>
        <alternativeName>
            <fullName>Flavivirin protease NS2B regulatory subunit</fullName>
        </alternativeName>
        <alternativeName>
            <fullName>Non-structural protein 2B</fullName>
        </alternativeName>
    </component>
    <component>
        <recommendedName>
            <fullName>Serine protease NS3</fullName>
            <ecNumber>3.4.21.91</ecNumber>
            <ecNumber evidence="11">3.6.1.15</ecNumber>
            <ecNumber evidence="11">3.6.4.13</ecNumber>
        </recommendedName>
        <alternativeName>
            <fullName>Flavivirin protease NS3 catalytic subunit</fullName>
        </alternativeName>
        <alternativeName>
            <fullName>Non-structural protein 3</fullName>
        </alternativeName>
    </component>
    <component>
        <recommendedName>
            <fullName>Non-structural protein 4A</fullName>
            <shortName>NS4A</shortName>
        </recommendedName>
    </component>
    <component>
        <recommendedName>
            <fullName>Peptide 2k</fullName>
        </recommendedName>
    </component>
    <component>
        <recommendedName>
            <fullName>Non-structural protein 4B</fullName>
            <shortName>NS4B</shortName>
        </recommendedName>
    </component>
    <component>
        <recommendedName>
            <fullName>RNA-directed RNA polymerase NS5</fullName>
            <ecNumber evidence="18">2.1.1.56</ecNumber>
            <ecNumber evidence="18">2.1.1.57</ecNumber>
            <ecNumber evidence="14">2.7.7.48</ecNumber>
        </recommendedName>
        <alternativeName>
            <fullName>Non-structural protein 5</fullName>
        </alternativeName>
    </component>
</protein>
<organism>
    <name type="scientific">Dengue virus type 4 (strain Thailand/0348/1991)</name>
    <name type="common">DENV-4</name>
    <dbReference type="NCBI Taxonomy" id="408688"/>
    <lineage>
        <taxon>Viruses</taxon>
        <taxon>Riboviria</taxon>
        <taxon>Orthornavirae</taxon>
        <taxon>Kitrinoviricota</taxon>
        <taxon>Flasuviricetes</taxon>
        <taxon>Amarillovirales</taxon>
        <taxon>Flaviviridae</taxon>
        <taxon>Orthoflavivirus</taxon>
        <taxon>Orthoflavivirus denguei</taxon>
        <taxon>Dengue virus</taxon>
    </lineage>
</organism>
<sequence>MNQRKKVARPPFNMLKRERNRVSTPQGLVKRFSTGLFSGKGPLRMVLAFITFLRVLSIPPTAGILKRWGQLKKNKAIKILTGFRKEIGRMLNILNGRKRSTITLLCLIPTVMAFHLSTRDGEPLMIVAKHERGRPLLFKTTEGINKCTLIAMDLGEMCEDTVTYKCPLLVNTEPEDIDCWCNLTSAWVMYGTCTQSGERRREKRSVALTPHSGMGLETRAETWMSSEGAWKHAQRVESWILRNPGFALLAGFMAYMIGQTGIQRTVFFILMMLVAPSYGMRCVGVGNRDFVEGVSGGAWVDLVLEHGGCVTTMAQGKPTLDFELIKTTAKEVALLRTYCIEASISNITTATRCPTQGEPYLKEEQDQQYICRRDMVDRGWGNGCGLFGKGGVVTCAKFSCSGKITGNLVQIENLEYTVVVTVHNGDTHAVGNDTSNHGVTATITPRSPSVEVKLPDYGELTLDCEPRSGIDFNEMILMKMKTKTWLVHKQWFLDLPLPWTAGADTLEVHWNHKERMVTFKVPHAKRQDVTVLGSQEGAMHSALAGATEVDSGDGNHMFAGHLKCKVRMEKLRIKGMSYTMCSGKFSIDKEMAETQHGTTVVKVKYEGTGAPCKVPIEIRDVNKEKVVGRIISSTPFAENTNSVTNIELEPPFGDSYIVIGVGDSALTLHWFRKGSSIGKMFESTYRGAKRMAILGETAWDFGSVGGLLTSLGKAVHQVFGSVYTTMFGGVSWMVRILIGLLVLWIGTNSRNTSMAMSCIAVGGITLFLGFTVHADMGCAVSWSGKELKCGSGIFVIDNVHTWTEQYKFQPESPARLASAILNAHKDGVCGIRSTTRLENVMWKQITNELNYVLWEGGHDLTVVAGDVKGVLSKGKRALAPPVNDLKYSWKTWGKAKIFTPETRNSTFLVDGPDTSECPNERRAWNFLEVEDYGFGMFTTNIWMKFREGSSEVCDHRLMSAAIKDQKAVHADMGYWIESSKNQTWQIEKASLIEVKTCLWPKTHTLWSNGVLESQMLIPKAYAGPISQHNYRQGYATQTVGPWHLGKLEIDFGECPGTTVTIQEDCDHRGPSLRTTTASGKLVTQWCCRSCTMPPLRFLGEDGCWYGMEIRPLNEKEENMVKSQVSAGQGTSETFSMGLLCLTLFVEECLRRRVTRKHMILVVVTTLCAIILGGLTWMDLLRALIMLGDTMSGRMGGQIHLAIMAVFKMSPGYVLGIFLRKLTSRETALMVIGMAMTTVLSIPHDLMEFIDGISLGLILLKMVTHFDNTQVGTLALSLTFIKSTMPLVMAWRTIMAVLFVVTLIPLCRTSCLQKQSHWVEITALILGAQALPVYLMTLMKGASKRSWPLNEGIMAVGLVSLLGSALLKNDVPLAGPMVAGGLLLAAYVMSGSSADLSLEKAANVQWDEMADITGSSPIIEVKQDEDGSFSIRDVEETNMITLLVKLALITVSGLYPLAIPVTMTLWYMWQVKTQRSGALWDVPSPAAAQKATLTEGVYRIMQRGLFGKTQVGVGIHMEGVFHTMWHVTRGSVICHESGRLEPSWADVRNDMISYGGGWRLGDKWDKEEDVQVLAIEPGKNPKHVQTKPGLFKTLTGEIGAVTLDFKPGTSGSPIINRKGKVIGLYGNGVVTKSGDYVSAITQAERIGEPDYEVDEDIFRKKRLTIMDLHPGAGKTKRILPSIVREALKRRLRTLILAPTRVVAAEMEEALRGLPIRYQTPAVKSEHTGREIVDLMCHATFTTRLLSSTRVPNYNLIVMDEAHFTDPSSVAARGYISTRVEMGEAAAIFMTATPPGTTDPFPQSNSPIEDIEREIPERSWNTGFDWITDYQGKTVWFVPSIKAGNDIANCLRKSGKKVIQLSRKTFDTEYPKTKLTDWDFVVTTDISEMGANFRAGRVIDPRRCLKPVILTDGPERVILAGPIPVTPASAAQRRGRIGRNPAQEDDQYVFSGDPLRNDEDHAHWTEAKMLLDNIYTPEGIIPTLFGPEREKTQAIDGEFRLRGEQRKTFVELMRRGDLPVWLSYKVASAGISYKDREWCFTGERNNQILEENMEVEIWTREGEKKKLRPKWLDARVYADPMALKDFKEFASGRKSITLDILTEIASLPTYLSSRAKLALDNIVMLHTTERGGKAYQHALNELPESLETLMLVALLGAMTAGIFLFFMQGKGIGKLSMGLIAIAVASGLLWVAEIQPQWIAASIILEFFLMVLLVPEPEKQRTPQDNQLIYVILTILTIIALVAANEMGLIEKTKTDFGFYQAKTETTILDVDLRPASAWTLYAVATTILTPMLRHTIENTSANLSLAAIANQAAVLMGLGKGWPLHRMDLGVPLLAMGCYSQVNPTTLTASLVMLLVHYAIIGPGLQAKATREAQKRTAAGIMKNPTVDGITVIDLEPISYDPKFEKQLGQVMLLVLCAGQLLLMRTTWAFCEVLTLATGPILTLWEGNPGRFWNTTIAVSTANIFRGSYLAGAGLAFSLIKNAQTPRRGTGTTGETLGEKWKRQLNSLDRKEFEEYKRSGILEVDRTEAKSALKDGSKIKYAVSRGTSKIRWIVERGMVKPKGKVVDLGCGRGGWSYYMATLKNVTEVKGYTKGGPGHEEPIPMATYGWNLVKLHSGVDVFYKPTEQVDTLLCDIGESSSNPTIEEGRTLRVLKMVEPWLSSKPEFCIKVLNPYMPTVIEELEKLQRKHGGSLVRCPLSRNSTHEMYWVSGVSGNIVSSVNTTSKMLLNRFTTRHRKPTYEKDADLGAGTRSVSTETEKPDMTIIGRRLQRLQEEHKETWHYDHENPYRTWAYHGSYEAPSTGSASSMVNGVVKLLTKPWDVVPMVTQLAMTDTTPFGQQRVFKEKVDTRTPQPKPGTRVVMTTTANWLWALLGRKKNPRLCTREEFISKVRSNAAIGAVFQEEQGWTSASEAVNDSRFWELVDKERALHQEGKCESCVYNMMGKREKKLGEFGRAKGSRAIWYMWLGARFLEFEALGFLNEDHWFGRENSWSGVEGEGLHRLGYILEDIDKKDGDLIYADDTAGWDTRITEDDLLNEELITEQMAPHHKILAKAIFKLTYQNKVVKVLRPTPKGAVMDIISRKDQRGSGQVGTYGLNTFTNMEVQLIRQMEAEGVITRDDMHNPKGLKERVEKWLKECGVDRLKRMAISGDDCVVKPLDERFSTSLLFLNDMGKVRKDIPQWEPSKGWKNWQEVPFCSHHFHKIFMKDGRSLVVPCRNQDELIGRARISQGAGWSLRETACLGKAYAQMWSLMYFHRRDLRLASMAICSAVPTEWFPTSRTTWSIHAHHQWMTTEDMLKVWNRVWIEDNPNMIDKTPVHSWEDIPYLGKREDLWCGSLIGLSSRATWAKNIQTAITQVRNLIGKEEYVDYMPVMKRYSAHFESEGVL</sequence>
<proteinExistence type="evidence at protein level"/>
<evidence type="ECO:0000250" key="1">
    <source>
        <dbReference type="UniProtKB" id="P03314"/>
    </source>
</evidence>
<evidence type="ECO:0000250" key="2">
    <source>
        <dbReference type="UniProtKB" id="P09866"/>
    </source>
</evidence>
<evidence type="ECO:0000250" key="3">
    <source>
        <dbReference type="UniProtKB" id="P14335"/>
    </source>
</evidence>
<evidence type="ECO:0000250" key="4">
    <source>
        <dbReference type="UniProtKB" id="P14336"/>
    </source>
</evidence>
<evidence type="ECO:0000250" key="5">
    <source>
        <dbReference type="UniProtKB" id="P14340"/>
    </source>
</evidence>
<evidence type="ECO:0000250" key="6">
    <source>
        <dbReference type="UniProtKB" id="P17763"/>
    </source>
</evidence>
<evidence type="ECO:0000250" key="7">
    <source>
        <dbReference type="UniProtKB" id="P29990"/>
    </source>
</evidence>
<evidence type="ECO:0000250" key="8">
    <source>
        <dbReference type="UniProtKB" id="P29991"/>
    </source>
</evidence>
<evidence type="ECO:0000250" key="9">
    <source>
        <dbReference type="UniProtKB" id="Q32ZE1"/>
    </source>
</evidence>
<evidence type="ECO:0000250" key="10">
    <source>
        <dbReference type="UniProtKB" id="Q6YMS4"/>
    </source>
</evidence>
<evidence type="ECO:0000250" key="11">
    <source>
        <dbReference type="UniProtKB" id="Q9Q6P4"/>
    </source>
</evidence>
<evidence type="ECO:0000255" key="12"/>
<evidence type="ECO:0000255" key="13">
    <source>
        <dbReference type="PROSITE-ProRule" id="PRU00498"/>
    </source>
</evidence>
<evidence type="ECO:0000255" key="14">
    <source>
        <dbReference type="PROSITE-ProRule" id="PRU00539"/>
    </source>
</evidence>
<evidence type="ECO:0000255" key="15">
    <source>
        <dbReference type="PROSITE-ProRule" id="PRU00541"/>
    </source>
</evidence>
<evidence type="ECO:0000255" key="16">
    <source>
        <dbReference type="PROSITE-ProRule" id="PRU00859"/>
    </source>
</evidence>
<evidence type="ECO:0000255" key="17">
    <source>
        <dbReference type="PROSITE-ProRule" id="PRU00860"/>
    </source>
</evidence>
<evidence type="ECO:0000255" key="18">
    <source>
        <dbReference type="PROSITE-ProRule" id="PRU00924"/>
    </source>
</evidence>
<evidence type="ECO:0000305" key="19">
    <source>
    </source>
</evidence>
<evidence type="ECO:0007829" key="20">
    <source>
        <dbReference type="PDB" id="2JLQ"/>
    </source>
</evidence>
<evidence type="ECO:0007829" key="21">
    <source>
        <dbReference type="PDB" id="2JLR"/>
    </source>
</evidence>
<evidence type="ECO:0007829" key="22">
    <source>
        <dbReference type="PDB" id="2JLS"/>
    </source>
</evidence>
<evidence type="ECO:0007829" key="23">
    <source>
        <dbReference type="PDB" id="2JLV"/>
    </source>
</evidence>
<evidence type="ECO:0007829" key="24">
    <source>
        <dbReference type="PDB" id="2JLX"/>
    </source>
</evidence>
<evidence type="ECO:0007829" key="25">
    <source>
        <dbReference type="PDB" id="2WHX"/>
    </source>
</evidence>
<evidence type="ECO:0007829" key="26">
    <source>
        <dbReference type="PDB" id="2WZQ"/>
    </source>
</evidence>
<evidence type="ECO:0007829" key="27">
    <source>
        <dbReference type="PDB" id="3UYP"/>
    </source>
</evidence>
<evidence type="ECO:0007829" key="28">
    <source>
        <dbReference type="PDB" id="5YVV"/>
    </source>
</evidence>
<accession>Q2YHF0</accession>
<feature type="chain" id="PRO_0000405229" description="Genome polyprotein">
    <location>
        <begin position="1"/>
        <end position="3387"/>
    </location>
</feature>
<feature type="chain" id="PRO_0000268131" description="Capsid protein C" evidence="7">
    <location>
        <begin position="1"/>
        <end position="99"/>
    </location>
</feature>
<feature type="propeptide" id="PRO_0000268132" description="ER anchor for the capsid protein C, removed in mature form by serine protease NS3" evidence="7">
    <location>
        <begin position="100"/>
        <end position="113"/>
    </location>
</feature>
<feature type="chain" id="PRO_0000268133" description="Protein prM" evidence="7">
    <location>
        <begin position="114"/>
        <end position="279"/>
    </location>
</feature>
<feature type="chain" id="PRO_0000268134" description="Peptide pr" evidence="7">
    <location>
        <begin position="114"/>
        <end position="204"/>
    </location>
</feature>
<feature type="chain" id="PRO_0000268135" description="Small envelope protein M" evidence="7">
    <location>
        <begin position="205"/>
        <end position="279"/>
    </location>
</feature>
<feature type="chain" id="PRO_0000268136" description="Envelope protein E" evidence="7">
    <location>
        <begin position="280"/>
        <end position="774"/>
    </location>
</feature>
<feature type="chain" id="PRO_0000268137" description="Non-structural protein 1" evidence="7">
    <location>
        <begin position="775"/>
        <end position="1126"/>
    </location>
</feature>
<feature type="chain" id="PRO_0000268138" description="Non-structural protein 2A" evidence="7">
    <location>
        <begin position="1127"/>
        <end position="1344"/>
    </location>
</feature>
<feature type="chain" id="PRO_0000268139" description="Serine protease subunit NS2B" evidence="7">
    <location>
        <begin position="1345"/>
        <end position="1474"/>
    </location>
</feature>
<feature type="chain" id="PRO_0000268140" description="Serine protease NS3" evidence="7">
    <location>
        <begin position="1475"/>
        <end position="2092"/>
    </location>
</feature>
<feature type="chain" id="PRO_0000268141" description="Non-structural protein 4A" evidence="7">
    <location>
        <begin position="2093"/>
        <end position="2219"/>
    </location>
</feature>
<feature type="peptide" id="PRO_0000268142" description="Peptide 2k" evidence="7">
    <location>
        <begin position="2220"/>
        <end position="2242"/>
    </location>
</feature>
<feature type="chain" id="PRO_0000268143" description="Non-structural protein 4B" evidence="7">
    <location>
        <begin position="2243"/>
        <end position="2487"/>
    </location>
</feature>
<feature type="chain" id="PRO_0000268144" description="RNA-directed RNA polymerase NS5" evidence="7">
    <location>
        <begin position="2488"/>
        <end position="3387"/>
    </location>
</feature>
<feature type="topological domain" description="Cytoplasmic" evidence="12">
    <location>
        <begin position="1"/>
        <end position="100"/>
    </location>
</feature>
<feature type="transmembrane region" description="Helical" evidence="12">
    <location>
        <begin position="101"/>
        <end position="117"/>
    </location>
</feature>
<feature type="topological domain" description="Extracellular" evidence="12">
    <location>
        <begin position="118"/>
        <end position="237"/>
    </location>
</feature>
<feature type="transmembrane region" description="Helical" evidence="12">
    <location>
        <begin position="238"/>
        <end position="258"/>
    </location>
</feature>
<feature type="topological domain" description="Cytoplasmic" evidence="12">
    <location>
        <begin position="259"/>
        <end position="265"/>
    </location>
</feature>
<feature type="transmembrane region" description="Helical" evidence="12">
    <location>
        <begin position="266"/>
        <end position="279"/>
    </location>
</feature>
<feature type="topological domain" description="Extracellular" evidence="12">
    <location>
        <begin position="280"/>
        <end position="725"/>
    </location>
</feature>
<feature type="transmembrane region" description="Helical" evidence="12">
    <location>
        <begin position="726"/>
        <end position="746"/>
    </location>
</feature>
<feature type="topological domain" description="Cytoplasmic" evidence="12">
    <location>
        <begin position="747"/>
        <end position="753"/>
    </location>
</feature>
<feature type="transmembrane region" description="Helical" evidence="12">
    <location>
        <begin position="754"/>
        <end position="774"/>
    </location>
</feature>
<feature type="topological domain" description="Extracellular" evidence="12">
    <location>
        <begin position="775"/>
        <end position="1194"/>
    </location>
</feature>
<feature type="transmembrane region" description="Helical" evidence="12">
    <location>
        <begin position="1195"/>
        <end position="1218"/>
    </location>
</feature>
<feature type="topological domain" description="Lumenal" evidence="12">
    <location>
        <begin position="1219"/>
        <end position="1224"/>
    </location>
</feature>
<feature type="transmembrane region" description="Helical" evidence="12">
    <location>
        <begin position="1225"/>
        <end position="1243"/>
    </location>
</feature>
<feature type="topological domain" description="Cytoplasmic" evidence="12">
    <location>
        <begin position="1244"/>
        <end position="1267"/>
    </location>
</feature>
<feature type="transmembrane region" description="Helical" evidence="12">
    <location>
        <begin position="1268"/>
        <end position="1288"/>
    </location>
</feature>
<feature type="topological domain" description="Lumenal" evidence="12">
    <location>
        <position position="1289"/>
    </location>
</feature>
<feature type="transmembrane region" description="Helical" evidence="12">
    <location>
        <begin position="1290"/>
        <end position="1308"/>
    </location>
</feature>
<feature type="topological domain" description="Lumenal" evidence="12">
    <location>
        <begin position="1309"/>
        <end position="1316"/>
    </location>
</feature>
<feature type="transmembrane region" description="Helical" evidence="12">
    <location>
        <begin position="1317"/>
        <end position="1337"/>
    </location>
</feature>
<feature type="topological domain" description="Cytoplasmic" evidence="12">
    <location>
        <begin position="1338"/>
        <end position="1345"/>
    </location>
</feature>
<feature type="transmembrane region" description="Helical" evidence="19">
    <location>
        <begin position="1346"/>
        <end position="1366"/>
    </location>
</feature>
<feature type="topological domain" description="Lumenal" evidence="19">
    <location>
        <begin position="1367"/>
        <end position="1369"/>
    </location>
</feature>
<feature type="transmembrane region" description="Helical" evidence="19">
    <location>
        <begin position="1370"/>
        <end position="1390"/>
    </location>
</feature>
<feature type="topological domain" description="Cytoplasmic" evidence="19">
    <location>
        <begin position="1391"/>
        <end position="1437"/>
    </location>
</feature>
<feature type="intramembrane region" description="Helical" evidence="19">
    <location>
        <begin position="1438"/>
        <end position="1458"/>
    </location>
</feature>
<feature type="topological domain" description="Cytoplasmic" evidence="12">
    <location>
        <begin position="1459"/>
        <end position="2143"/>
    </location>
</feature>
<feature type="transmembrane region" description="Helical" evidence="12">
    <location>
        <begin position="2144"/>
        <end position="2164"/>
    </location>
</feature>
<feature type="topological domain" description="Lumenal" evidence="12">
    <location>
        <begin position="2165"/>
        <end position="2169"/>
    </location>
</feature>
<feature type="intramembrane region" description="Helical" evidence="12">
    <location>
        <begin position="2170"/>
        <end position="2190"/>
    </location>
</feature>
<feature type="topological domain" description="Lumenal" evidence="12">
    <location>
        <position position="2191"/>
    </location>
</feature>
<feature type="transmembrane region" description="Helical" evidence="12">
    <location>
        <begin position="2192"/>
        <end position="2212"/>
    </location>
</feature>
<feature type="topological domain" description="Cytoplasmic" evidence="12">
    <location>
        <begin position="2213"/>
        <end position="2225"/>
    </location>
</feature>
<feature type="transmembrane region" description="Helical; Note=Signal for NS4B" evidence="12">
    <location>
        <begin position="2226"/>
        <end position="2246"/>
    </location>
</feature>
<feature type="topological domain" description="Lumenal" evidence="12">
    <location>
        <begin position="2247"/>
        <end position="2270"/>
    </location>
</feature>
<feature type="intramembrane region" description="Helical" evidence="12">
    <location>
        <begin position="2271"/>
        <end position="2291"/>
    </location>
</feature>
<feature type="topological domain" description="Lumenal" evidence="12">
    <location>
        <begin position="2292"/>
        <end position="2301"/>
    </location>
</feature>
<feature type="intramembrane region" description="Helical" evidence="12">
    <location>
        <begin position="2302"/>
        <end position="2322"/>
    </location>
</feature>
<feature type="topological domain" description="Lumenal" evidence="12">
    <location>
        <begin position="2323"/>
        <end position="2343"/>
    </location>
</feature>
<feature type="transmembrane region" description="Helical" evidence="12">
    <location>
        <begin position="2344"/>
        <end position="2364"/>
    </location>
</feature>
<feature type="topological domain" description="Cytoplasmic" evidence="12">
    <location>
        <begin position="2365"/>
        <end position="2409"/>
    </location>
</feature>
<feature type="transmembrane region" description="Helical" evidence="12">
    <location>
        <begin position="2410"/>
        <end position="2430"/>
    </location>
</feature>
<feature type="topological domain" description="Lumenal" evidence="12">
    <location>
        <begin position="2431"/>
        <end position="2455"/>
    </location>
</feature>
<feature type="transmembrane region" description="Helical" evidence="12">
    <location>
        <begin position="2456"/>
        <end position="2476"/>
    </location>
</feature>
<feature type="topological domain" description="Cytoplasmic" evidence="12">
    <location>
        <begin position="2477"/>
        <end position="3387"/>
    </location>
</feature>
<feature type="domain" description="Peptidase S7" evidence="17">
    <location>
        <begin position="1475"/>
        <end position="1652"/>
    </location>
</feature>
<feature type="domain" description="Helicase ATP-binding" evidence="15">
    <location>
        <begin position="1654"/>
        <end position="1810"/>
    </location>
</feature>
<feature type="domain" description="Helicase C-terminal">
    <location>
        <begin position="1820"/>
        <end position="1987"/>
    </location>
</feature>
<feature type="domain" description="mRNA cap 0-1 NS5-type MT" evidence="18">
    <location>
        <begin position="2489"/>
        <end position="2751"/>
    </location>
</feature>
<feature type="domain" description="RdRp catalytic" evidence="14">
    <location>
        <begin position="3016"/>
        <end position="3166"/>
    </location>
</feature>
<feature type="region of interest" description="Hydrophobic; homodimerization of capsid protein C" evidence="7">
    <location>
        <begin position="36"/>
        <end position="71"/>
    </location>
</feature>
<feature type="region of interest" description="Fusion peptide" evidence="4">
    <location>
        <begin position="377"/>
        <end position="390"/>
    </location>
</feature>
<feature type="region of interest" description="Interacts with and activates NS3 protease" evidence="16">
    <location>
        <begin position="1397"/>
        <end position="1436"/>
    </location>
</feature>
<feature type="region of interest" description="Important for RNA-binding" evidence="5">
    <location>
        <begin position="1658"/>
        <end position="1661"/>
    </location>
</feature>
<feature type="short sequence motif" description="DEAH box" evidence="15">
    <location>
        <begin position="1758"/>
        <end position="1761"/>
    </location>
</feature>
<feature type="short sequence motif" description="SUMO-interacting motif" evidence="7">
    <location>
        <begin position="2564"/>
        <end position="2567"/>
    </location>
</feature>
<feature type="active site" description="Charge relay system; for serine protease NS3 activity" evidence="17">
    <location>
        <position position="1525"/>
    </location>
</feature>
<feature type="active site" description="Charge relay system; for serine protease NS3 activity" evidence="17">
    <location>
        <position position="1549"/>
    </location>
</feature>
<feature type="active site" description="Charge relay system; for serine protease NS3 activity" evidence="17">
    <location>
        <position position="1609"/>
    </location>
</feature>
<feature type="active site" description="For 2'-O-MTase activity" evidence="10">
    <location>
        <position position="2548"/>
    </location>
</feature>
<feature type="active site" description="For 2'-O-MTase activity" evidence="10">
    <location>
        <position position="2633"/>
    </location>
</feature>
<feature type="active site" description="For 2'-O-MTase activity" evidence="10">
    <location>
        <position position="2668"/>
    </location>
</feature>
<feature type="active site" description="For 2'-O-MTase activity" evidence="10">
    <location>
        <position position="2704"/>
    </location>
</feature>
<feature type="binding site" evidence="15">
    <location>
        <begin position="1667"/>
        <end position="1674"/>
    </location>
    <ligand>
        <name>ATP</name>
        <dbReference type="ChEBI" id="CHEBI:30616"/>
    </ligand>
</feature>
<feature type="binding site" evidence="18">
    <location>
        <position position="2543"/>
    </location>
    <ligand>
        <name>S-adenosyl-L-methionine</name>
        <dbReference type="ChEBI" id="CHEBI:59789"/>
    </ligand>
</feature>
<feature type="binding site" evidence="18">
    <location>
        <position position="2573"/>
    </location>
    <ligand>
        <name>S-adenosyl-L-methionine</name>
        <dbReference type="ChEBI" id="CHEBI:59789"/>
    </ligand>
</feature>
<feature type="binding site" evidence="18">
    <location>
        <position position="2574"/>
    </location>
    <ligand>
        <name>S-adenosyl-L-methionine</name>
        <dbReference type="ChEBI" id="CHEBI:59789"/>
    </ligand>
</feature>
<feature type="binding site" evidence="18">
    <location>
        <position position="2591"/>
    </location>
    <ligand>
        <name>S-adenosyl-L-methionine</name>
        <dbReference type="ChEBI" id="CHEBI:59789"/>
    </ligand>
</feature>
<feature type="binding site" evidence="18">
    <location>
        <position position="2592"/>
    </location>
    <ligand>
        <name>S-adenosyl-L-methionine</name>
        <dbReference type="ChEBI" id="CHEBI:59789"/>
    </ligand>
</feature>
<feature type="binding site" evidence="18">
    <location>
        <position position="2618"/>
    </location>
    <ligand>
        <name>S-adenosyl-L-methionine</name>
        <dbReference type="ChEBI" id="CHEBI:59789"/>
    </ligand>
</feature>
<feature type="binding site" evidence="18">
    <location>
        <position position="2619"/>
    </location>
    <ligand>
        <name>S-adenosyl-L-methionine</name>
        <dbReference type="ChEBI" id="CHEBI:59789"/>
    </ligand>
</feature>
<feature type="binding site" evidence="18">
    <location>
        <position position="2634"/>
    </location>
    <ligand>
        <name>S-adenosyl-L-methionine</name>
        <dbReference type="ChEBI" id="CHEBI:59789"/>
    </ligand>
</feature>
<feature type="binding site" evidence="18">
    <location>
        <position position="2706"/>
    </location>
    <ligand>
        <name>S-adenosyl-L-methionine</name>
        <dbReference type="ChEBI" id="CHEBI:59789"/>
    </ligand>
</feature>
<feature type="binding site" evidence="10">
    <location>
        <position position="2925"/>
    </location>
    <ligand>
        <name>Zn(2+)</name>
        <dbReference type="ChEBI" id="CHEBI:29105"/>
        <label>1</label>
    </ligand>
</feature>
<feature type="binding site" evidence="10">
    <location>
        <position position="2929"/>
    </location>
    <ligand>
        <name>Zn(2+)</name>
        <dbReference type="ChEBI" id="CHEBI:29105"/>
        <label>1</label>
    </ligand>
</feature>
<feature type="binding site" evidence="10">
    <location>
        <position position="2934"/>
    </location>
    <ligand>
        <name>Zn(2+)</name>
        <dbReference type="ChEBI" id="CHEBI:29105"/>
        <label>1</label>
    </ligand>
</feature>
<feature type="binding site" evidence="10">
    <location>
        <position position="2937"/>
    </location>
    <ligand>
        <name>Zn(2+)</name>
        <dbReference type="ChEBI" id="CHEBI:29105"/>
        <label>1</label>
    </ligand>
</feature>
<feature type="binding site" evidence="10">
    <location>
        <position position="3200"/>
    </location>
    <ligand>
        <name>Zn(2+)</name>
        <dbReference type="ChEBI" id="CHEBI:29105"/>
        <label>2</label>
    </ligand>
</feature>
<feature type="binding site" evidence="10">
    <location>
        <position position="3216"/>
    </location>
    <ligand>
        <name>Zn(2+)</name>
        <dbReference type="ChEBI" id="CHEBI:29105"/>
        <label>2</label>
    </ligand>
</feature>
<feature type="binding site" evidence="10">
    <location>
        <position position="3335"/>
    </location>
    <ligand>
        <name>Zn(2+)</name>
        <dbReference type="ChEBI" id="CHEBI:29105"/>
        <label>2</label>
    </ligand>
</feature>
<feature type="site" description="Cleavage; by viral protease NS3" evidence="7">
    <location>
        <begin position="99"/>
        <end position="100"/>
    </location>
</feature>
<feature type="site" description="Cleavage; by host signal peptidase" evidence="7">
    <location>
        <begin position="113"/>
        <end position="114"/>
    </location>
</feature>
<feature type="site" description="Cleavage; by host furin" evidence="7 12">
    <location>
        <begin position="204"/>
        <end position="205"/>
    </location>
</feature>
<feature type="site" description="Cleavage; by host signal peptidase" evidence="7">
    <location>
        <begin position="279"/>
        <end position="280"/>
    </location>
</feature>
<feature type="site" description="Cleavage; by host signal peptidase" evidence="7">
    <location>
        <begin position="774"/>
        <end position="775"/>
    </location>
</feature>
<feature type="site" description="Cleavage; by host" evidence="7">
    <location>
        <begin position="1126"/>
        <end position="1127"/>
    </location>
</feature>
<feature type="site" description="Cleavage; by viral protease NS3" evidence="7">
    <location>
        <begin position="1344"/>
        <end position="1345"/>
    </location>
</feature>
<feature type="site" description="Cleavage; by autolysis" evidence="7">
    <location>
        <begin position="1474"/>
        <end position="1475"/>
    </location>
</feature>
<feature type="site" description="Involved in NS3 ATPase and RTPase activities" evidence="3">
    <location>
        <position position="1931"/>
    </location>
</feature>
<feature type="site" description="Involved in NS3 ATPase and RTPase activities" evidence="3">
    <location>
        <position position="1934"/>
    </location>
</feature>
<feature type="site" description="Cleavage; by autolysis" evidence="7">
    <location>
        <begin position="2092"/>
        <end position="2093"/>
    </location>
</feature>
<feature type="site" description="Cleavage; by viral protease NS3" evidence="7">
    <location>
        <begin position="2219"/>
        <end position="2220"/>
    </location>
</feature>
<feature type="site" description="Cleavage; by host signal peptidase" evidence="7">
    <location>
        <begin position="2242"/>
        <end position="2243"/>
    </location>
</feature>
<feature type="site" description="Cleavage; by viral protease NS3" evidence="7">
    <location>
        <begin position="2487"/>
        <end position="2488"/>
    </location>
</feature>
<feature type="site" description="mRNA cap binding" evidence="18">
    <location>
        <position position="2501"/>
    </location>
</feature>
<feature type="site" description="mRNA cap binding; via carbonyl oxygen" evidence="18">
    <location>
        <position position="2504"/>
    </location>
</feature>
<feature type="site" description="mRNA cap binding" evidence="18">
    <location>
        <position position="2505"/>
    </location>
</feature>
<feature type="site" description="mRNA cap binding; via carbonyl oxygen" evidence="18">
    <location>
        <position position="2507"/>
    </location>
</feature>
<feature type="site" description="mRNA cap binding" evidence="18">
    <location>
        <position position="2512"/>
    </location>
</feature>
<feature type="site" description="mRNA cap binding" evidence="18">
    <location>
        <position position="2516"/>
    </location>
</feature>
<feature type="site" description="Essential for 2'-O-methyltransferase activity" evidence="18">
    <location>
        <position position="2548"/>
    </location>
</feature>
<feature type="site" description="Essential for 2'-O-methyltransferase and N-7 methyltransferase activity" evidence="18">
    <location>
        <position position="2633"/>
    </location>
</feature>
<feature type="site" description="mRNA cap binding" evidence="18">
    <location>
        <position position="2637"/>
    </location>
</feature>
<feature type="site" description="Essential for 2'-O-methyltransferase activity" evidence="18">
    <location>
        <position position="2668"/>
    </location>
</feature>
<feature type="site" description="mRNA cap binding" evidence="18">
    <location>
        <position position="2699"/>
    </location>
</feature>
<feature type="site" description="mRNA cap binding" evidence="18">
    <location>
        <position position="2701"/>
    </location>
</feature>
<feature type="site" description="Essential for 2'-O-methyltransferase activity" evidence="18">
    <location>
        <position position="2704"/>
    </location>
</feature>
<feature type="modified residue" description="N6-acetyllysine; by host" evidence="9">
    <location>
        <position position="1862"/>
    </location>
</feature>
<feature type="modified residue" description="Phosphoserine" evidence="1">
    <location>
        <position position="2543"/>
    </location>
</feature>
<feature type="glycosylation site" description="N-linked (GlcNAc...) asparagine; by host" evidence="13">
    <location>
        <position position="182"/>
    </location>
</feature>
<feature type="glycosylation site" description="N-linked (GlcNAc...) asparagine; by host" evidence="13">
    <location>
        <position position="346"/>
    </location>
</feature>
<feature type="glycosylation site" description="N-linked (GlcNAc...) asparagine; by host" evidence="13">
    <location>
        <position position="432"/>
    </location>
</feature>
<feature type="glycosylation site" description="N-linked (GlcNAc...) asparagine; by host" evidence="13">
    <location>
        <position position="904"/>
    </location>
</feature>
<feature type="glycosylation site" description="N-linked (GlcNAc...) asparagine; by host" evidence="13">
    <location>
        <position position="981"/>
    </location>
</feature>
<feature type="glycosylation site" description="N-linked (GlcNAc...) asparagine; by host" evidence="13">
    <location>
        <position position="2297"/>
    </location>
</feature>
<feature type="glycosylation site" description="N-linked (GlcNAc...) asparagine; by host" evidence="13">
    <location>
        <position position="2301"/>
    </location>
</feature>
<feature type="glycosylation site" description="N-linked (GlcNAc...) asparagine; by host" evidence="13">
    <location>
        <position position="2453"/>
    </location>
</feature>
<feature type="disulfide bond" evidence="6">
    <location>
        <begin position="282"/>
        <end position="309"/>
    </location>
</feature>
<feature type="disulfide bond" evidence="6">
    <location>
        <begin position="339"/>
        <end position="400"/>
    </location>
</feature>
<feature type="disulfide bond" evidence="6">
    <location>
        <begin position="353"/>
        <end position="384"/>
    </location>
</feature>
<feature type="disulfide bond" evidence="6">
    <location>
        <begin position="371"/>
        <end position="395"/>
    </location>
</feature>
<feature type="disulfide bond" evidence="6">
    <location>
        <begin position="464"/>
        <end position="564"/>
    </location>
</feature>
<feature type="disulfide bond" evidence="6">
    <location>
        <begin position="581"/>
        <end position="612"/>
    </location>
</feature>
<feature type="disulfide bond" evidence="6">
    <location>
        <begin position="778"/>
        <end position="789"/>
    </location>
</feature>
<feature type="disulfide bond" evidence="6">
    <location>
        <begin position="829"/>
        <end position="917"/>
    </location>
</feature>
<feature type="disulfide bond" evidence="6">
    <location>
        <begin position="953"/>
        <end position="997"/>
    </location>
</feature>
<feature type="disulfide bond" evidence="6">
    <location>
        <begin position="1054"/>
        <end position="1103"/>
    </location>
</feature>
<feature type="disulfide bond" evidence="6">
    <location>
        <begin position="1065"/>
        <end position="1087"/>
    </location>
</feature>
<feature type="disulfide bond" evidence="6">
    <location>
        <begin position="1086"/>
        <end position="1090"/>
    </location>
</feature>
<feature type="strand" evidence="27">
    <location>
        <begin position="585"/>
        <end position="589"/>
    </location>
</feature>
<feature type="strand" evidence="27">
    <location>
        <begin position="599"/>
        <end position="605"/>
    </location>
</feature>
<feature type="strand" evidence="27">
    <location>
        <begin position="607"/>
        <end position="609"/>
    </location>
</feature>
<feature type="strand" evidence="27">
    <location>
        <begin position="611"/>
        <end position="613"/>
    </location>
</feature>
<feature type="strand" evidence="27">
    <location>
        <begin position="616"/>
        <end position="619"/>
    </location>
</feature>
<feature type="strand" evidence="27">
    <location>
        <begin position="625"/>
        <end position="630"/>
    </location>
</feature>
<feature type="strand" evidence="27">
    <location>
        <begin position="632"/>
        <end position="634"/>
    </location>
</feature>
<feature type="strand" evidence="27">
    <location>
        <begin position="639"/>
        <end position="642"/>
    </location>
</feature>
<feature type="strand" evidence="27">
    <location>
        <begin position="644"/>
        <end position="649"/>
    </location>
</feature>
<feature type="strand" evidence="27">
    <location>
        <begin position="652"/>
        <end position="661"/>
    </location>
</feature>
<feature type="helix" evidence="27">
    <location>
        <begin position="662"/>
        <end position="664"/>
    </location>
</feature>
<feature type="strand" evidence="27">
    <location>
        <begin position="665"/>
        <end position="672"/>
    </location>
</feature>
<feature type="strand" evidence="25">
    <location>
        <begin position="1395"/>
        <end position="1401"/>
    </location>
</feature>
<feature type="strand" evidence="28">
    <location>
        <begin position="1409"/>
        <end position="1412"/>
    </location>
</feature>
<feature type="strand" evidence="28">
    <location>
        <begin position="1417"/>
        <end position="1420"/>
    </location>
</feature>
<feature type="strand" evidence="28">
    <location>
        <begin position="1424"/>
        <end position="1427"/>
    </location>
</feature>
<feature type="strand" evidence="25">
    <location>
        <begin position="1496"/>
        <end position="1502"/>
    </location>
</feature>
<feature type="strand" evidence="25">
    <location>
        <begin position="1507"/>
        <end position="1514"/>
    </location>
</feature>
<feature type="strand" evidence="25">
    <location>
        <begin position="1516"/>
        <end position="1518"/>
    </location>
</feature>
<feature type="strand" evidence="25">
    <location>
        <begin position="1520"/>
        <end position="1522"/>
    </location>
</feature>
<feature type="helix" evidence="25">
    <location>
        <begin position="1524"/>
        <end position="1527"/>
    </location>
</feature>
<feature type="strand" evidence="28">
    <location>
        <begin position="1532"/>
        <end position="1536"/>
    </location>
</feature>
<feature type="strand" evidence="25">
    <location>
        <begin position="1541"/>
        <end position="1545"/>
    </location>
</feature>
<feature type="turn" evidence="25">
    <location>
        <begin position="1546"/>
        <end position="1549"/>
    </location>
</feature>
<feature type="strand" evidence="25">
    <location>
        <begin position="1550"/>
        <end position="1556"/>
    </location>
</feature>
<feature type="strand" evidence="25">
    <location>
        <begin position="1565"/>
        <end position="1567"/>
    </location>
</feature>
<feature type="strand" evidence="25">
    <location>
        <begin position="1569"/>
        <end position="1573"/>
    </location>
</feature>
<feature type="strand" evidence="25">
    <location>
        <begin position="1581"/>
        <end position="1585"/>
    </location>
</feature>
<feature type="strand" evidence="28">
    <location>
        <begin position="1589"/>
        <end position="1591"/>
    </location>
</feature>
<feature type="strand" evidence="25">
    <location>
        <begin position="1598"/>
        <end position="1600"/>
    </location>
</feature>
<feature type="strand" evidence="25">
    <location>
        <begin position="1612"/>
        <end position="1614"/>
    </location>
</feature>
<feature type="strand" evidence="25">
    <location>
        <begin position="1616"/>
        <end position="1618"/>
    </location>
</feature>
<feature type="strand" evidence="25">
    <location>
        <begin position="1620"/>
        <end position="1623"/>
    </location>
</feature>
<feature type="strand" evidence="28">
    <location>
        <begin position="1631"/>
        <end position="1634"/>
    </location>
</feature>
<feature type="strand" evidence="26">
    <location>
        <begin position="1637"/>
        <end position="1640"/>
    </location>
</feature>
<feature type="strand" evidence="24">
    <location>
        <begin position="1645"/>
        <end position="1647"/>
    </location>
</feature>
<feature type="helix" evidence="20">
    <location>
        <begin position="1654"/>
        <end position="1657"/>
    </location>
</feature>
<feature type="strand" evidence="20">
    <location>
        <begin position="1662"/>
        <end position="1665"/>
    </location>
</feature>
<feature type="strand" evidence="26">
    <location>
        <begin position="1669"/>
        <end position="1671"/>
    </location>
</feature>
<feature type="turn" evidence="23">
    <location>
        <begin position="1673"/>
        <end position="1676"/>
    </location>
</feature>
<feature type="helix" evidence="20">
    <location>
        <begin position="1677"/>
        <end position="1687"/>
    </location>
</feature>
<feature type="strand" evidence="20">
    <location>
        <begin position="1692"/>
        <end position="1698"/>
    </location>
</feature>
<feature type="helix" evidence="20">
    <location>
        <begin position="1699"/>
        <end position="1708"/>
    </location>
</feature>
<feature type="turn" evidence="20">
    <location>
        <begin position="1709"/>
        <end position="1711"/>
    </location>
</feature>
<feature type="strand" evidence="20">
    <location>
        <begin position="1714"/>
        <end position="1716"/>
    </location>
</feature>
<feature type="strand" evidence="21">
    <location>
        <begin position="1727"/>
        <end position="1729"/>
    </location>
</feature>
<feature type="strand" evidence="20">
    <location>
        <begin position="1731"/>
        <end position="1735"/>
    </location>
</feature>
<feature type="helix" evidence="20">
    <location>
        <begin position="1736"/>
        <end position="1745"/>
    </location>
</feature>
<feature type="strand" evidence="20">
    <location>
        <begin position="1753"/>
        <end position="1758"/>
    </location>
</feature>
<feature type="turn" evidence="20">
    <location>
        <begin position="1759"/>
        <end position="1761"/>
    </location>
</feature>
<feature type="helix" evidence="20">
    <location>
        <begin position="1765"/>
        <end position="1779"/>
    </location>
</feature>
<feature type="strand" evidence="20">
    <location>
        <begin position="1784"/>
        <end position="1788"/>
    </location>
</feature>
<feature type="strand" evidence="20">
    <location>
        <begin position="1806"/>
        <end position="1810"/>
    </location>
</feature>
<feature type="strand" evidence="20">
    <location>
        <begin position="1819"/>
        <end position="1821"/>
    </location>
</feature>
<feature type="helix" evidence="20">
    <location>
        <begin position="1823"/>
        <end position="1827"/>
    </location>
</feature>
<feature type="strand" evidence="20">
    <location>
        <begin position="1832"/>
        <end position="1835"/>
    </location>
</feature>
<feature type="helix" evidence="20">
    <location>
        <begin position="1839"/>
        <end position="1850"/>
    </location>
</feature>
<feature type="turn" evidence="20">
    <location>
        <begin position="1851"/>
        <end position="1853"/>
    </location>
</feature>
<feature type="strand" evidence="20">
    <location>
        <begin position="1856"/>
        <end position="1859"/>
    </location>
</feature>
<feature type="turn" evidence="20">
    <location>
        <begin position="1861"/>
        <end position="1863"/>
    </location>
</feature>
<feature type="helix" evidence="20">
    <location>
        <begin position="1864"/>
        <end position="1867"/>
    </location>
</feature>
<feature type="helix" evidence="20">
    <location>
        <begin position="1868"/>
        <end position="1872"/>
    </location>
</feature>
<feature type="strand" evidence="20">
    <location>
        <begin position="1877"/>
        <end position="1881"/>
    </location>
</feature>
<feature type="helix" evidence="20">
    <location>
        <begin position="1883"/>
        <end position="1886"/>
    </location>
</feature>
<feature type="strand" evidence="20">
    <location>
        <begin position="1894"/>
        <end position="1898"/>
    </location>
</feature>
<feature type="strand" evidence="20">
    <location>
        <begin position="1901"/>
        <end position="1908"/>
    </location>
</feature>
<feature type="strand" evidence="20">
    <location>
        <begin position="1910"/>
        <end position="1912"/>
    </location>
</feature>
<feature type="strand" evidence="20">
    <location>
        <begin position="1914"/>
        <end position="1922"/>
    </location>
</feature>
<feature type="helix" evidence="20">
    <location>
        <begin position="1925"/>
        <end position="1932"/>
    </location>
</feature>
<feature type="strand" evidence="26">
    <location>
        <begin position="1935"/>
        <end position="1938"/>
    </location>
</feature>
<feature type="strand" evidence="20">
    <location>
        <begin position="1944"/>
        <end position="1948"/>
    </location>
</feature>
<feature type="helix" evidence="20">
    <location>
        <begin position="1960"/>
        <end position="1969"/>
    </location>
</feature>
<feature type="strand" evidence="28">
    <location>
        <begin position="1975"/>
        <end position="1977"/>
    </location>
</feature>
<feature type="helix" evidence="20">
    <location>
        <begin position="1984"/>
        <end position="1989"/>
    </location>
</feature>
<feature type="turn" evidence="20">
    <location>
        <begin position="1994"/>
        <end position="1997"/>
    </location>
</feature>
<feature type="helix" evidence="20">
    <location>
        <begin position="2001"/>
        <end position="2012"/>
    </location>
</feature>
<feature type="helix" evidence="20">
    <location>
        <begin position="2018"/>
        <end position="2026"/>
    </location>
</feature>
<feature type="helix" evidence="20">
    <location>
        <begin position="2035"/>
        <end position="2037"/>
    </location>
</feature>
<feature type="helix" evidence="20">
    <location>
        <begin position="2042"/>
        <end position="2044"/>
    </location>
</feature>
<feature type="strand" evidence="22">
    <location>
        <begin position="2047"/>
        <end position="2052"/>
    </location>
</feature>
<feature type="strand" evidence="20">
    <location>
        <begin position="2054"/>
        <end position="2056"/>
    </location>
</feature>
<feature type="strand" evidence="28">
    <location>
        <begin position="2058"/>
        <end position="2060"/>
    </location>
</feature>
<feature type="strand" evidence="20">
    <location>
        <begin position="2062"/>
        <end position="2064"/>
    </location>
</feature>
<feature type="helix" evidence="20">
    <location>
        <begin position="2072"/>
        <end position="2074"/>
    </location>
</feature>
<feature type="strand" evidence="28">
    <location>
        <begin position="2075"/>
        <end position="2077"/>
    </location>
</feature>
<feature type="helix" evidence="20">
    <location>
        <begin position="2078"/>
        <end position="2088"/>
    </location>
</feature>
<organismHost>
    <name type="scientific">Aedes aegypti</name>
    <name type="common">Yellowfever mosquito</name>
    <name type="synonym">Culex aegypti</name>
    <dbReference type="NCBI Taxonomy" id="7159"/>
</organismHost>
<organismHost>
    <name type="scientific">Aedes albopictus</name>
    <name type="common">Asian tiger mosquito</name>
    <name type="synonym">Stegomyia albopicta</name>
    <dbReference type="NCBI Taxonomy" id="7160"/>
</organismHost>
<organismHost>
    <name type="scientific">Aedes polynesiensis</name>
    <name type="common">Polynesian tiger mosquito</name>
    <dbReference type="NCBI Taxonomy" id="188700"/>
</organismHost>
<organismHost>
    <name type="scientific">Homo sapiens</name>
    <name type="common">Human</name>
    <dbReference type="NCBI Taxonomy" id="9606"/>
</organismHost>
<name>POLG_DEN4T</name>